<protein>
    <recommendedName>
        <fullName>Replicase polyprotein 1ab</fullName>
        <shortName>pp1ab</shortName>
    </recommendedName>
    <alternativeName>
        <fullName>ORF1ab polyprotein</fullName>
    </alternativeName>
    <component>
        <recommendedName>
            <fullName>Host translation inhibitor nsp1</fullName>
            <shortName>nsp1</shortName>
        </recommendedName>
        <alternativeName>
            <fullName>Leader protein</fullName>
        </alternativeName>
    </component>
    <component>
        <recommendedName>
            <fullName>Non-structural protein 2</fullName>
            <shortName>nsp2</shortName>
        </recommendedName>
        <alternativeName>
            <fullName>p65 homolog</fullName>
        </alternativeName>
    </component>
    <component>
        <recommendedName>
            <fullName>Papain-like proteinase nsp3</fullName>
            <shortName>PL-PRO</shortName>
            <ecNumber>3.4.19.12</ecNumber>
            <ecNumber>3.4.22.-</ecNumber>
        </recommendedName>
        <alternativeName>
            <fullName>Non-structural protein 3</fullName>
            <shortName>nsp3</shortName>
        </alternativeName>
    </component>
    <component>
        <recommendedName>
            <fullName>Non-structural protein 4</fullName>
            <shortName>nsp4</shortName>
        </recommendedName>
    </component>
    <component>
        <recommendedName>
            <fullName>3C-like proteinase nsp5</fullName>
            <shortName>3CL-PRO</shortName>
            <shortName>3CLp</shortName>
            <ecNumber>3.4.22.-</ecNumber>
        </recommendedName>
        <alternativeName>
            <fullName>nsp5</fullName>
        </alternativeName>
    </component>
    <component>
        <recommendedName>
            <fullName>Non-structural protein 6</fullName>
            <shortName>nsp6</shortName>
        </recommendedName>
    </component>
    <component>
        <recommendedName>
            <fullName>Non-structural protein 7</fullName>
            <shortName>nsp7</shortName>
        </recommendedName>
    </component>
    <component>
        <recommendedName>
            <fullName>Non-structural protein 8</fullName>
            <shortName>nsp8</shortName>
        </recommendedName>
    </component>
    <component>
        <recommendedName>
            <fullName>Viral protein genome-linked nsp9</fullName>
        </recommendedName>
        <alternativeName>
            <fullName>Non-structural protein 9</fullName>
            <shortName>nsp9</shortName>
        </alternativeName>
        <alternativeName>
            <fullName>RNA-capping enzyme subunit nsp9</fullName>
        </alternativeName>
    </component>
    <component>
        <recommendedName>
            <fullName>Non-structural protein 10</fullName>
            <shortName>nsp10</shortName>
        </recommendedName>
        <alternativeName>
            <fullName>Growth factor-like peptide</fullName>
            <shortName>GFL</shortName>
        </alternativeName>
    </component>
    <component>
        <recommendedName>
            <fullName>RNA-directed RNA polymerase nsp12</fullName>
            <shortName>Pol</shortName>
            <shortName>RdRp</shortName>
            <ecNumber>2.7.7.48</ecNumber>
            <ecNumber>2.7.7.50</ecNumber>
        </recommendedName>
    </component>
    <component>
        <recommendedName>
            <fullName>Helicase nsp13</fullName>
            <shortName>Hel</shortName>
            <ecNumber>3.6.4.12</ecNumber>
            <ecNumber>3.6.4.13</ecNumber>
        </recommendedName>
        <alternativeName>
            <fullName>nsp13</fullName>
        </alternativeName>
    </component>
    <component>
        <recommendedName>
            <fullName>Guanine-N7 methyltransferase nsp14</fullName>
            <shortName>ExoN</shortName>
            <ecNumber>2.1.1.56</ecNumber>
            <ecNumber>3.1.13.-</ecNumber>
        </recommendedName>
        <alternativeName>
            <fullName>nsp14</fullName>
        </alternativeName>
    </component>
    <component>
        <recommendedName>
            <fullName>Uridylate-specific endoribonuclease nsp15</fullName>
            <ecNumber>4.6.1.-</ecNumber>
        </recommendedName>
        <alternativeName>
            <fullName>NendoU</fullName>
        </alternativeName>
        <alternativeName>
            <fullName>nsp15</fullName>
        </alternativeName>
    </component>
    <component>
        <recommendedName>
            <fullName>2'-O-methyltransferase nsp16</fullName>
            <ecNumber>2.1.1.57</ecNumber>
        </recommendedName>
        <alternativeName>
            <fullName>nsp16</fullName>
        </alternativeName>
    </component>
</protein>
<organismHost>
    <name type="scientific">Tylonycteris pachypus</name>
    <name type="common">Lesser bamboo bat</name>
    <name type="synonym">Vespertilio pachypus</name>
    <dbReference type="NCBI Taxonomy" id="258959"/>
</organismHost>
<evidence type="ECO:0000250" key="1"/>
<evidence type="ECO:0000250" key="2">
    <source>
        <dbReference type="UniProtKB" id="P0C6X7"/>
    </source>
</evidence>
<evidence type="ECO:0000250" key="3">
    <source>
        <dbReference type="UniProtKB" id="P0DTD1"/>
    </source>
</evidence>
<evidence type="ECO:0000255" key="4"/>
<evidence type="ECO:0000255" key="5">
    <source>
        <dbReference type="PROSITE-ProRule" id="PRU00214"/>
    </source>
</evidence>
<evidence type="ECO:0000255" key="6">
    <source>
        <dbReference type="PROSITE-ProRule" id="PRU00444"/>
    </source>
</evidence>
<evidence type="ECO:0000255" key="7">
    <source>
        <dbReference type="PROSITE-ProRule" id="PRU00490"/>
    </source>
</evidence>
<evidence type="ECO:0000255" key="8">
    <source>
        <dbReference type="PROSITE-ProRule" id="PRU00539"/>
    </source>
</evidence>
<evidence type="ECO:0000255" key="9">
    <source>
        <dbReference type="PROSITE-ProRule" id="PRU00772"/>
    </source>
</evidence>
<evidence type="ECO:0000255" key="10">
    <source>
        <dbReference type="PROSITE-ProRule" id="PRU00986"/>
    </source>
</evidence>
<evidence type="ECO:0000255" key="11">
    <source>
        <dbReference type="PROSITE-ProRule" id="PRU01289"/>
    </source>
</evidence>
<evidence type="ECO:0000255" key="12">
    <source>
        <dbReference type="PROSITE-ProRule" id="PRU01290"/>
    </source>
</evidence>
<evidence type="ECO:0000255" key="13">
    <source>
        <dbReference type="PROSITE-ProRule" id="PRU01291"/>
    </source>
</evidence>
<evidence type="ECO:0000255" key="14">
    <source>
        <dbReference type="PROSITE-ProRule" id="PRU01292"/>
    </source>
</evidence>
<evidence type="ECO:0000255" key="15">
    <source>
        <dbReference type="PROSITE-ProRule" id="PRU01293"/>
    </source>
</evidence>
<evidence type="ECO:0000255" key="16">
    <source>
        <dbReference type="PROSITE-ProRule" id="PRU01294"/>
    </source>
</evidence>
<evidence type="ECO:0000255" key="17">
    <source>
        <dbReference type="PROSITE-ProRule" id="PRU01295"/>
    </source>
</evidence>
<evidence type="ECO:0000255" key="18">
    <source>
        <dbReference type="PROSITE-ProRule" id="PRU01296"/>
    </source>
</evidence>
<evidence type="ECO:0000255" key="19">
    <source>
        <dbReference type="PROSITE-ProRule" id="PRU01297"/>
    </source>
</evidence>
<evidence type="ECO:0000255" key="20">
    <source>
        <dbReference type="PROSITE-ProRule" id="PRU01298"/>
    </source>
</evidence>
<evidence type="ECO:0000255" key="21">
    <source>
        <dbReference type="PROSITE-ProRule" id="PRU01299"/>
    </source>
</evidence>
<evidence type="ECO:0000255" key="22">
    <source>
        <dbReference type="PROSITE-ProRule" id="PRU01300"/>
    </source>
</evidence>
<evidence type="ECO:0000255" key="23">
    <source>
        <dbReference type="PROSITE-ProRule" id="PRU01303"/>
    </source>
</evidence>
<evidence type="ECO:0000255" key="24">
    <source>
        <dbReference type="PROSITE-ProRule" id="PRU01305"/>
    </source>
</evidence>
<evidence type="ECO:0000255" key="25">
    <source>
        <dbReference type="PROSITE-ProRule" id="PRU01306"/>
    </source>
</evidence>
<evidence type="ECO:0000255" key="26">
    <source>
        <dbReference type="PROSITE-ProRule" id="PRU01307"/>
    </source>
</evidence>
<evidence type="ECO:0000255" key="27">
    <source>
        <dbReference type="PROSITE-ProRule" id="PRU01308"/>
    </source>
</evidence>
<evidence type="ECO:0000255" key="28">
    <source>
        <dbReference type="PROSITE-ProRule" id="PRU01333"/>
    </source>
</evidence>
<evidence type="ECO:0000255" key="29">
    <source>
        <dbReference type="PROSITE-ProRule" id="PRU01334"/>
    </source>
</evidence>
<evidence type="ECO:0000255" key="30">
    <source>
        <dbReference type="PROSITE-ProRule" id="PRU01335"/>
    </source>
</evidence>
<evidence type="ECO:0000255" key="31">
    <source>
        <dbReference type="PROSITE-ProRule" id="PRU01336"/>
    </source>
</evidence>
<evidence type="ECO:0000255" key="32">
    <source>
        <dbReference type="PROSITE-ProRule" id="PRU01337"/>
    </source>
</evidence>
<evidence type="ECO:0000255" key="33">
    <source>
        <dbReference type="PROSITE-ProRule" id="PRU01338"/>
    </source>
</evidence>
<evidence type="ECO:0000255" key="34">
    <source>
        <dbReference type="PROSITE-ProRule" id="PRU01344"/>
    </source>
</evidence>
<evidence type="ECO:0000305" key="35"/>
<evidence type="ECO:0007829" key="36">
    <source>
        <dbReference type="PDB" id="4YOG"/>
    </source>
</evidence>
<evidence type="ECO:0007829" key="37">
    <source>
        <dbReference type="PDB" id="4YOI"/>
    </source>
</evidence>
<evidence type="ECO:0007829" key="38">
    <source>
        <dbReference type="PDB" id="6MEA"/>
    </source>
</evidence>
<evidence type="ECO:0007829" key="39">
    <source>
        <dbReference type="PDB" id="6MWM"/>
    </source>
</evidence>
<organism>
    <name type="scientific">Bat coronavirus HKU4</name>
    <name type="common">BtCoV</name>
    <name type="synonym">BtCoV/HKU4/2004</name>
    <dbReference type="NCBI Taxonomy" id="694007"/>
    <lineage>
        <taxon>Viruses</taxon>
        <taxon>Riboviria</taxon>
        <taxon>Orthornavirae</taxon>
        <taxon>Pisuviricota</taxon>
        <taxon>Pisoniviricetes</taxon>
        <taxon>Nidovirales</taxon>
        <taxon>Cornidovirineae</taxon>
        <taxon>Coronaviridae</taxon>
        <taxon>Orthocoronavirinae</taxon>
        <taxon>Betacoronavirus</taxon>
        <taxon>Merbecovirus</taxon>
    </lineage>
</organism>
<feature type="chain" id="PRO_0000290288" description="Host translation inhibitor nsp1" evidence="2">
    <location>
        <begin position="1"/>
        <end position="195"/>
    </location>
</feature>
<feature type="chain" id="PRO_0000290289" description="Non-structural protein 2" evidence="2">
    <location>
        <begin position="196"/>
        <end position="847"/>
    </location>
</feature>
<feature type="chain" id="PRO_0000290290" description="Papain-like proteinase nsp3" evidence="2">
    <location>
        <begin position="848"/>
        <end position="2784"/>
    </location>
</feature>
<feature type="chain" id="PRO_0000290291" description="Non-structural protein 4" evidence="2">
    <location>
        <begin position="2785"/>
        <end position="3291"/>
    </location>
</feature>
<feature type="chain" id="PRO_0000290292" description="3C-like proteinase nsp5" evidence="2">
    <location>
        <begin position="3292"/>
        <end position="3597"/>
    </location>
</feature>
<feature type="chain" id="PRO_0000290293" description="Non-structural protein 6" evidence="2">
    <location>
        <begin position="3598"/>
        <end position="3889"/>
    </location>
</feature>
<feature type="chain" id="PRO_0000290294" description="Non-structural protein 7" evidence="2">
    <location>
        <begin position="3890"/>
        <end position="3972"/>
    </location>
</feature>
<feature type="chain" id="PRO_0000290295" description="Non-structural protein 8" evidence="2">
    <location>
        <begin position="3973"/>
        <end position="4171"/>
    </location>
</feature>
<feature type="chain" id="PRO_0000290296" description="Viral protein genome-linked nsp9" evidence="2">
    <location>
        <begin position="4172"/>
        <end position="4281"/>
    </location>
</feature>
<feature type="chain" id="PRO_0000290297" description="Non-structural protein 10" evidence="2">
    <location>
        <begin position="4282"/>
        <end position="4420"/>
    </location>
</feature>
<feature type="chain" id="PRO_0000290298" description="RNA-directed RNA polymerase nsp12" evidence="2">
    <location>
        <begin position="4421"/>
        <end position="5354"/>
    </location>
</feature>
<feature type="chain" id="PRO_0000290299" description="Helicase nsp13" evidence="2">
    <location>
        <begin position="5355"/>
        <end position="5952"/>
    </location>
</feature>
<feature type="chain" id="PRO_0000290300" description="Guanine-N7 methyltransferase nsp14" evidence="2">
    <location>
        <begin position="5953"/>
        <end position="6475"/>
    </location>
</feature>
<feature type="chain" id="PRO_0000290301" description="Uridylate-specific endoribonuclease nsp15" evidence="2">
    <location>
        <begin position="6476"/>
        <end position="6817"/>
    </location>
</feature>
<feature type="chain" id="PRO_0000290302" description="2'-O-methyltransferase nsp16" evidence="2">
    <location>
        <begin position="6818"/>
        <end position="7119"/>
    </location>
</feature>
<feature type="transmembrane region" description="Helical" evidence="4">
    <location>
        <begin position="2112"/>
        <end position="2132"/>
    </location>
</feature>
<feature type="transmembrane region" description="Helical" evidence="4">
    <location>
        <begin position="2145"/>
        <end position="2165"/>
    </location>
</feature>
<feature type="transmembrane region" description="Helical" evidence="4">
    <location>
        <begin position="2222"/>
        <end position="2242"/>
    </location>
</feature>
<feature type="transmembrane region" description="Helical" evidence="4">
    <location>
        <begin position="2326"/>
        <end position="2346"/>
    </location>
</feature>
<feature type="transmembrane region" description="Helical" evidence="4">
    <location>
        <begin position="2350"/>
        <end position="2370"/>
    </location>
</feature>
<feature type="transmembrane region" description="Helical" evidence="4">
    <location>
        <begin position="2375"/>
        <end position="2395"/>
    </location>
</feature>
<feature type="transmembrane region" description="Helical" evidence="4">
    <location>
        <begin position="2800"/>
        <end position="2820"/>
    </location>
</feature>
<feature type="transmembrane region" description="Helical" evidence="4">
    <location>
        <begin position="3072"/>
        <end position="3092"/>
    </location>
</feature>
<feature type="transmembrane region" description="Helical" evidence="4">
    <location>
        <begin position="3105"/>
        <end position="3125"/>
    </location>
</feature>
<feature type="transmembrane region" description="Helical" evidence="4">
    <location>
        <begin position="3149"/>
        <end position="3169"/>
    </location>
</feature>
<feature type="transmembrane region" description="Helical" evidence="4">
    <location>
        <begin position="3603"/>
        <end position="3623"/>
    </location>
</feature>
<feature type="transmembrane region" description="Helical" evidence="4">
    <location>
        <begin position="3637"/>
        <end position="3657"/>
    </location>
</feature>
<feature type="transmembrane region" description="Helical" evidence="4">
    <location>
        <begin position="3662"/>
        <end position="3682"/>
    </location>
</feature>
<feature type="transmembrane region" description="Helical" evidence="4">
    <location>
        <begin position="3707"/>
        <end position="3727"/>
    </location>
</feature>
<feature type="transmembrane region" description="Helical" evidence="4">
    <location>
        <begin position="3735"/>
        <end position="3755"/>
    </location>
</feature>
<feature type="transmembrane region" description="Helical" evidence="4">
    <location>
        <begin position="3784"/>
        <end position="3804"/>
    </location>
</feature>
<feature type="transmembrane region" description="Helical" evidence="4">
    <location>
        <begin position="3808"/>
        <end position="3828"/>
    </location>
</feature>
<feature type="domain" description="CoV Nsp1 globular" evidence="26">
    <location>
        <begin position="25"/>
        <end position="151"/>
    </location>
</feature>
<feature type="domain" description="BetaCoV Nsp1 C-terminal" evidence="27">
    <location>
        <begin position="167"/>
        <end position="195"/>
    </location>
</feature>
<feature type="domain" description="CoV Nsp2 N-terminal" evidence="28">
    <location>
        <begin position="197"/>
        <end position="472"/>
    </location>
</feature>
<feature type="domain" description="CoV Nsp2 middle" evidence="29">
    <location>
        <begin position="478"/>
        <end position="712"/>
    </location>
</feature>
<feature type="domain" description="CoV Nsp2 C-terminal" evidence="30">
    <location>
        <begin position="714"/>
        <end position="847"/>
    </location>
</feature>
<feature type="domain" description="Ubiquitin-like 1" evidence="5">
    <location>
        <begin position="851"/>
        <end position="960"/>
    </location>
</feature>
<feature type="domain" description="Macro 1" evidence="7">
    <location>
        <begin position="1152"/>
        <end position="1321"/>
    </location>
</feature>
<feature type="domain" description="Macro 2" evidence="7">
    <location>
        <begin position="1322"/>
        <end position="1446"/>
    </location>
</feature>
<feature type="domain" description="DPUP" evidence="11">
    <location>
        <begin position="1446"/>
        <end position="1519"/>
    </location>
</feature>
<feature type="domain" description="Ubiquitin-like 2" evidence="5">
    <location>
        <begin position="1524"/>
        <end position="1579"/>
    </location>
</feature>
<feature type="domain" description="Peptidase C16" evidence="6">
    <location>
        <begin position="1593"/>
        <end position="1864"/>
    </location>
</feature>
<feature type="domain" description="Nucleic acid-binding" evidence="12">
    <location>
        <begin position="1878"/>
        <end position="1995"/>
    </location>
</feature>
<feature type="domain" description="G2M" evidence="33">
    <location>
        <begin position="2012"/>
        <end position="2133"/>
    </location>
</feature>
<feature type="domain" description="3Ecto" evidence="32">
    <location>
        <begin position="2259"/>
        <end position="2325"/>
    </location>
</feature>
<feature type="domain" description="CoV Nsp3 Y" evidence="31">
    <location>
        <begin position="2409"/>
        <end position="2782"/>
    </location>
</feature>
<feature type="domain" description="Nsp4C" evidence="13">
    <location>
        <begin position="3195"/>
        <end position="3291"/>
    </location>
</feature>
<feature type="domain" description="Peptidase C30" evidence="9">
    <location>
        <begin position="3292"/>
        <end position="3597"/>
    </location>
</feature>
<feature type="domain" description="RdRp Nsp7 cofactor" evidence="16">
    <location>
        <begin position="3890"/>
        <end position="3972"/>
    </location>
</feature>
<feature type="domain" description="RdRp Nsp8 cofactor" evidence="17">
    <location>
        <begin position="3973"/>
        <end position="4171"/>
    </location>
</feature>
<feature type="domain" description="Nsp9 ssRNA-binding" evidence="18">
    <location>
        <begin position="4172"/>
        <end position="4281"/>
    </location>
</feature>
<feature type="domain" description="ExoN/MTase coactivator" evidence="19">
    <location>
        <begin position="4282"/>
        <end position="4420"/>
    </location>
</feature>
<feature type="domain" description="NiRAN" evidence="14">
    <location>
        <begin position="4426"/>
        <end position="4683"/>
    </location>
</feature>
<feature type="domain" description="Nsp12 Interface" evidence="34">
    <location>
        <begin position="4688"/>
        <end position="4786"/>
    </location>
</feature>
<feature type="domain" description="Nsp12 RNA-dependent RNA polymerase" evidence="15">
    <location>
        <begin position="4787"/>
        <end position="5354"/>
    </location>
</feature>
<feature type="domain" description="RdRp catalytic" evidence="8">
    <location>
        <begin position="5034"/>
        <end position="5196"/>
    </location>
</feature>
<feature type="domain" description="CV ZBD" evidence="10">
    <location>
        <begin position="5355"/>
        <end position="5467"/>
    </location>
</feature>
<feature type="domain" description="(+)RNA virus helicase ATP-binding">
    <location>
        <begin position="5611"/>
        <end position="5792"/>
    </location>
</feature>
<feature type="domain" description="(+)RNA virus helicase C-terminal">
    <location>
        <begin position="5793"/>
        <end position="5967"/>
    </location>
</feature>
<feature type="domain" description="ExoN" evidence="20">
    <location>
        <begin position="6024"/>
        <end position="6239"/>
    </location>
</feature>
<feature type="domain" description="N7-MTase" evidence="21">
    <location>
        <begin position="6248"/>
        <end position="6475"/>
    </location>
</feature>
<feature type="domain" description="Nsp15 N-terminal oligomerization" evidence="24">
    <location>
        <begin position="6476"/>
        <end position="6536"/>
    </location>
</feature>
<feature type="domain" description="AV-Nsp11N/CoV-Nsp15M" evidence="25">
    <location>
        <begin position="6537"/>
        <end position="6658"/>
    </location>
</feature>
<feature type="domain" description="NendoU" evidence="23">
    <location>
        <begin position="6675"/>
        <end position="6814"/>
    </location>
</feature>
<feature type="domain" description="Nidovirus-type SAM-dependent 2'-O-MTase" evidence="22">
    <location>
        <begin position="6819"/>
        <end position="7113"/>
    </location>
</feature>
<feature type="zinc finger region" description="C4-type" evidence="6">
    <location>
        <begin position="1714"/>
        <end position="1751"/>
    </location>
</feature>
<feature type="zinc finger region" evidence="1">
    <location>
        <begin position="4355"/>
        <end position="4371"/>
    </location>
</feature>
<feature type="zinc finger region" evidence="1">
    <location>
        <begin position="4397"/>
        <end position="4410"/>
    </location>
</feature>
<feature type="region of interest" description="C4" evidence="28">
    <location>
        <begin position="339"/>
        <end position="360"/>
    </location>
</feature>
<feature type="region of interest" description="HD1" evidence="1">
    <location>
        <begin position="2112"/>
        <end position="2395"/>
    </location>
</feature>
<feature type="region of interest" description="Y1" evidence="31">
    <location>
        <begin position="2409"/>
        <end position="2499"/>
    </location>
</feature>
<feature type="region of interest" description="ZF1" evidence="31">
    <location>
        <begin position="2413"/>
        <end position="2426"/>
    </location>
</feature>
<feature type="region of interest" description="ZF2" evidence="31">
    <location>
        <begin position="2459"/>
        <end position="2469"/>
    </location>
</feature>
<feature type="region of interest" description="CoV-Y" evidence="31">
    <location>
        <begin position="2500"/>
        <end position="2782"/>
    </location>
</feature>
<feature type="region of interest" description="Y2" evidence="31">
    <location>
        <begin position="2500"/>
        <end position="2598"/>
    </location>
</feature>
<feature type="region of interest" description="Y3" evidence="31">
    <location>
        <begin position="2599"/>
        <end position="2681"/>
    </location>
</feature>
<feature type="region of interest" description="Y4" evidence="31">
    <location>
        <begin position="2682"/>
        <end position="2782"/>
    </location>
</feature>
<feature type="region of interest" description="HD2" evidence="1">
    <location>
        <begin position="2800"/>
        <end position="3169"/>
    </location>
</feature>
<feature type="region of interest" description="HD3" evidence="1">
    <location>
        <begin position="3603"/>
        <end position="3828"/>
    </location>
</feature>
<feature type="region of interest" description="RdRp Fingers N-ter" evidence="15">
    <location>
        <begin position="4789"/>
        <end position="5003"/>
    </location>
</feature>
<feature type="region of interest" description="RdRp Palm N-ter" evidence="15">
    <location>
        <begin position="5004"/>
        <end position="5042"/>
    </location>
</feature>
<feature type="region of interest" description="RdRp Fingers C-ter" evidence="15">
    <location>
        <begin position="5043"/>
        <end position="5101"/>
    </location>
</feature>
<feature type="region of interest" description="RdRp Palm C-ter" evidence="15">
    <location>
        <begin position="5102"/>
        <end position="5237"/>
    </location>
</feature>
<feature type="region of interest" description="RdRp Thumb" evidence="15">
    <location>
        <begin position="5238"/>
        <end position="5354"/>
    </location>
</feature>
<feature type="region of interest" description="GpppA-binding" evidence="21">
    <location>
        <begin position="6361"/>
        <end position="6375"/>
    </location>
</feature>
<feature type="active site" description="For PL-PRO activity" evidence="6">
    <location>
        <position position="1634"/>
    </location>
</feature>
<feature type="active site" description="For PL-PRO activity" evidence="6">
    <location>
        <position position="1800"/>
    </location>
</feature>
<feature type="active site" description="For PL-PRO activity" evidence="6">
    <location>
        <position position="1815"/>
    </location>
</feature>
<feature type="active site" description="For 3CL-PRO activity" evidence="9">
    <location>
        <position position="3332"/>
    </location>
</feature>
<feature type="active site" description="For 3CL-PRO activity" evidence="9">
    <location>
        <position position="3439"/>
    </location>
</feature>
<feature type="active site" evidence="15">
    <location>
        <position position="5181"/>
    </location>
</feature>
<feature type="active site" evidence="15">
    <location>
        <position position="5182"/>
    </location>
</feature>
<feature type="active site" evidence="15">
    <location>
        <position position="5183"/>
    </location>
</feature>
<feature type="active site" evidence="20">
    <location>
        <position position="6042"/>
    </location>
</feature>
<feature type="active site" evidence="20">
    <location>
        <position position="6044"/>
    </location>
</feature>
<feature type="active site" evidence="20">
    <location>
        <position position="6143"/>
    </location>
</feature>
<feature type="active site" evidence="20">
    <location>
        <position position="6220"/>
    </location>
</feature>
<feature type="active site" evidence="20">
    <location>
        <position position="6225"/>
    </location>
</feature>
<feature type="active site" evidence="23">
    <location>
        <position position="6705"/>
    </location>
</feature>
<feature type="active site" evidence="23">
    <location>
        <position position="6720"/>
    </location>
</feature>
<feature type="active site" evidence="23">
    <location>
        <position position="6760"/>
    </location>
</feature>
<feature type="active site" evidence="22">
    <location>
        <position position="6863"/>
    </location>
</feature>
<feature type="active site" evidence="22">
    <location>
        <position position="6947"/>
    </location>
</feature>
<feature type="active site" evidence="22">
    <location>
        <position position="6987"/>
    </location>
</feature>
<feature type="active site" evidence="22">
    <location>
        <position position="7020"/>
    </location>
</feature>
<feature type="binding site" evidence="28">
    <location>
        <position position="339"/>
    </location>
    <ligand>
        <name>Zn(2+)</name>
        <dbReference type="ChEBI" id="CHEBI:29105"/>
        <label>1</label>
    </ligand>
</feature>
<feature type="binding site" evidence="28">
    <location>
        <position position="342"/>
    </location>
    <ligand>
        <name>Zn(2+)</name>
        <dbReference type="ChEBI" id="CHEBI:29105"/>
        <label>1</label>
    </ligand>
</feature>
<feature type="binding site" evidence="28">
    <location>
        <position position="358"/>
    </location>
    <ligand>
        <name>Zn(2+)</name>
        <dbReference type="ChEBI" id="CHEBI:29105"/>
        <label>1</label>
    </ligand>
</feature>
<feature type="binding site" evidence="28">
    <location>
        <position position="360"/>
    </location>
    <ligand>
        <name>Zn(2+)</name>
        <dbReference type="ChEBI" id="CHEBI:29105"/>
        <label>1</label>
    </ligand>
</feature>
<feature type="binding site" evidence="6">
    <location>
        <position position="1714"/>
    </location>
    <ligand>
        <name>Zn(2+)</name>
        <dbReference type="ChEBI" id="CHEBI:29105"/>
        <label>2</label>
    </ligand>
</feature>
<feature type="binding site" evidence="6">
    <location>
        <position position="1717"/>
    </location>
    <ligand>
        <name>Zn(2+)</name>
        <dbReference type="ChEBI" id="CHEBI:29105"/>
        <label>2</label>
    </ligand>
</feature>
<feature type="binding site" evidence="6">
    <location>
        <position position="1749"/>
    </location>
    <ligand>
        <name>Zn(2+)</name>
        <dbReference type="ChEBI" id="CHEBI:29105"/>
        <label>2</label>
    </ligand>
</feature>
<feature type="binding site" evidence="6">
    <location>
        <position position="1751"/>
    </location>
    <ligand>
        <name>Zn(2+)</name>
        <dbReference type="ChEBI" id="CHEBI:29105"/>
        <label>2</label>
    </ligand>
</feature>
<feature type="binding site" evidence="31">
    <location>
        <position position="2413"/>
    </location>
    <ligand>
        <name>Zn(2+)</name>
        <dbReference type="ChEBI" id="CHEBI:29105"/>
        <label>3</label>
    </ligand>
</feature>
<feature type="binding site" evidence="31">
    <location>
        <position position="2418"/>
    </location>
    <ligand>
        <name>Zn(2+)</name>
        <dbReference type="ChEBI" id="CHEBI:29105"/>
        <label>3</label>
    </ligand>
</feature>
<feature type="binding site" evidence="31">
    <location>
        <position position="2423"/>
    </location>
    <ligand>
        <name>Zn(2+)</name>
        <dbReference type="ChEBI" id="CHEBI:29105"/>
        <label>3</label>
    </ligand>
</feature>
<feature type="binding site" evidence="31">
    <location>
        <position position="2426"/>
    </location>
    <ligand>
        <name>Zn(2+)</name>
        <dbReference type="ChEBI" id="CHEBI:29105"/>
        <label>3</label>
    </ligand>
</feature>
<feature type="binding site" evidence="31">
    <location>
        <position position="2459"/>
    </location>
    <ligand>
        <name>Zn(2+)</name>
        <dbReference type="ChEBI" id="CHEBI:29105"/>
        <label>4</label>
    </ligand>
</feature>
<feature type="binding site" evidence="31">
    <location>
        <position position="2462"/>
    </location>
    <ligand>
        <name>Zn(2+)</name>
        <dbReference type="ChEBI" id="CHEBI:29105"/>
        <label>4</label>
    </ligand>
</feature>
<feature type="binding site" evidence="31">
    <location>
        <position position="2466"/>
    </location>
    <ligand>
        <name>Zn(2+)</name>
        <dbReference type="ChEBI" id="CHEBI:29105"/>
        <label>4</label>
    </ligand>
</feature>
<feature type="binding site" evidence="31">
    <location>
        <position position="2469"/>
    </location>
    <ligand>
        <name>Zn(2+)</name>
        <dbReference type="ChEBI" id="CHEBI:29105"/>
        <label>4</label>
    </ligand>
</feature>
<feature type="binding site" evidence="19">
    <location>
        <position position="4355"/>
    </location>
    <ligand>
        <name>Zn(2+)</name>
        <dbReference type="ChEBI" id="CHEBI:29105"/>
        <label>5</label>
    </ligand>
</feature>
<feature type="binding site" evidence="19">
    <location>
        <position position="4358"/>
    </location>
    <ligand>
        <name>Zn(2+)</name>
        <dbReference type="ChEBI" id="CHEBI:29105"/>
        <label>5</label>
    </ligand>
</feature>
<feature type="binding site" evidence="19">
    <location>
        <position position="4364"/>
    </location>
    <ligand>
        <name>Zn(2+)</name>
        <dbReference type="ChEBI" id="CHEBI:29105"/>
        <label>5</label>
    </ligand>
</feature>
<feature type="binding site" evidence="19">
    <location>
        <position position="4371"/>
    </location>
    <ligand>
        <name>Zn(2+)</name>
        <dbReference type="ChEBI" id="CHEBI:29105"/>
        <label>5</label>
    </ligand>
</feature>
<feature type="binding site" evidence="19">
    <location>
        <position position="4397"/>
    </location>
    <ligand>
        <name>Zn(2+)</name>
        <dbReference type="ChEBI" id="CHEBI:29105"/>
        <label>6</label>
    </ligand>
</feature>
<feature type="binding site" evidence="19">
    <location>
        <position position="4400"/>
    </location>
    <ligand>
        <name>Zn(2+)</name>
        <dbReference type="ChEBI" id="CHEBI:29105"/>
        <label>6</label>
    </ligand>
</feature>
<feature type="binding site" evidence="19">
    <location>
        <position position="4408"/>
    </location>
    <ligand>
        <name>Zn(2+)</name>
        <dbReference type="ChEBI" id="CHEBI:29105"/>
        <label>6</label>
    </ligand>
</feature>
<feature type="binding site" evidence="19">
    <location>
        <position position="4410"/>
    </location>
    <ligand>
        <name>Zn(2+)</name>
        <dbReference type="ChEBI" id="CHEBI:29105"/>
        <label>6</label>
    </ligand>
</feature>
<feature type="binding site" evidence="3">
    <location>
        <position position="4631"/>
    </location>
    <ligand>
        <name>Mn(2+)</name>
        <dbReference type="ChEBI" id="CHEBI:29035"/>
    </ligand>
</feature>
<feature type="binding site" evidence="3">
    <location>
        <position position="4640"/>
    </location>
    <ligand>
        <name>Mn(2+)</name>
        <dbReference type="ChEBI" id="CHEBI:29035"/>
    </ligand>
</feature>
<feature type="binding site" evidence="34">
    <location>
        <position position="4717"/>
    </location>
    <ligand>
        <name>Zn(2+)</name>
        <dbReference type="ChEBI" id="CHEBI:29105"/>
        <label>7</label>
    </ligand>
</feature>
<feature type="binding site" evidence="34">
    <location>
        <position position="4723"/>
    </location>
    <ligand>
        <name>Zn(2+)</name>
        <dbReference type="ChEBI" id="CHEBI:29105"/>
        <label>7</label>
    </ligand>
</feature>
<feature type="binding site" evidence="34">
    <location>
        <position position="4728"/>
    </location>
    <ligand>
        <name>Zn(2+)</name>
        <dbReference type="ChEBI" id="CHEBI:29105"/>
        <label>7</label>
    </ligand>
</feature>
<feature type="binding site" evidence="34">
    <location>
        <position position="4732"/>
    </location>
    <ligand>
        <name>Zn(2+)</name>
        <dbReference type="ChEBI" id="CHEBI:29105"/>
        <label>7</label>
    </ligand>
</feature>
<feature type="binding site" evidence="15">
    <location>
        <position position="4909"/>
    </location>
    <ligand>
        <name>Zn(2+)</name>
        <dbReference type="ChEBI" id="CHEBI:29105"/>
        <label>8</label>
    </ligand>
</feature>
<feature type="binding site" evidence="15">
    <location>
        <position position="5064"/>
    </location>
    <ligand>
        <name>Zn(2+)</name>
        <dbReference type="ChEBI" id="CHEBI:29105"/>
        <label>8</label>
    </ligand>
</feature>
<feature type="binding site" evidence="15">
    <location>
        <position position="5067"/>
    </location>
    <ligand>
        <name>Zn(2+)</name>
        <dbReference type="ChEBI" id="CHEBI:29105"/>
        <label>8</label>
    </ligand>
</feature>
<feature type="binding site" evidence="15">
    <location>
        <position position="5068"/>
    </location>
    <ligand>
        <name>Zn(2+)</name>
        <dbReference type="ChEBI" id="CHEBI:29105"/>
        <label>8</label>
    </ligand>
</feature>
<feature type="binding site" evidence="10">
    <location>
        <position position="5359"/>
    </location>
    <ligand>
        <name>Zn(2+)</name>
        <dbReference type="ChEBI" id="CHEBI:29105"/>
        <label>9</label>
    </ligand>
</feature>
<feature type="binding site" evidence="10">
    <location>
        <position position="5362"/>
    </location>
    <ligand>
        <name>Zn(2+)</name>
        <dbReference type="ChEBI" id="CHEBI:29105"/>
        <label>9</label>
    </ligand>
</feature>
<feature type="binding site" evidence="10">
    <location>
        <position position="5370"/>
    </location>
    <ligand>
        <name>Zn(2+)</name>
        <dbReference type="ChEBI" id="CHEBI:29105"/>
        <label>10</label>
    </ligand>
</feature>
<feature type="binding site" evidence="10">
    <location>
        <position position="5373"/>
    </location>
    <ligand>
        <name>Zn(2+)</name>
        <dbReference type="ChEBI" id="CHEBI:29105"/>
        <label>10</label>
    </ligand>
</feature>
<feature type="binding site" evidence="10">
    <location>
        <position position="5380"/>
    </location>
    <ligand>
        <name>Zn(2+)</name>
        <dbReference type="ChEBI" id="CHEBI:29105"/>
        <label>9</label>
    </ligand>
</feature>
<feature type="binding site" evidence="10">
    <location>
        <position position="5383"/>
    </location>
    <ligand>
        <name>Zn(2+)</name>
        <dbReference type="ChEBI" id="CHEBI:29105"/>
        <label>9</label>
    </ligand>
</feature>
<feature type="binding site" evidence="10">
    <location>
        <position position="5387"/>
    </location>
    <ligand>
        <name>Zn(2+)</name>
        <dbReference type="ChEBI" id="CHEBI:29105"/>
        <label>10</label>
    </ligand>
</feature>
<feature type="binding site" evidence="10">
    <location>
        <position position="5393"/>
    </location>
    <ligand>
        <name>Zn(2+)</name>
        <dbReference type="ChEBI" id="CHEBI:29105"/>
        <label>10</label>
    </ligand>
</feature>
<feature type="binding site" evidence="10">
    <location>
        <position position="5404"/>
    </location>
    <ligand>
        <name>Zn(2+)</name>
        <dbReference type="ChEBI" id="CHEBI:29105"/>
        <label>11</label>
    </ligand>
</feature>
<feature type="binding site" evidence="10">
    <location>
        <position position="5409"/>
    </location>
    <ligand>
        <name>Zn(2+)</name>
        <dbReference type="ChEBI" id="CHEBI:29105"/>
        <label>11</label>
    </ligand>
</feature>
<feature type="binding site" evidence="10">
    <location>
        <position position="5426"/>
    </location>
    <ligand>
        <name>Zn(2+)</name>
        <dbReference type="ChEBI" id="CHEBI:29105"/>
        <label>11</label>
    </ligand>
</feature>
<feature type="binding site" evidence="10">
    <location>
        <position position="5429"/>
    </location>
    <ligand>
        <name>Zn(2+)</name>
        <dbReference type="ChEBI" id="CHEBI:29105"/>
        <label>11</label>
    </ligand>
</feature>
<feature type="binding site" evidence="1">
    <location>
        <begin position="5636"/>
        <end position="5643"/>
    </location>
    <ligand>
        <name>ATP</name>
        <dbReference type="ChEBI" id="CHEBI:30616"/>
    </ligand>
</feature>
<feature type="binding site" evidence="20">
    <location>
        <position position="6159"/>
    </location>
    <ligand>
        <name>Zn(2+)</name>
        <dbReference type="ChEBI" id="CHEBI:29105"/>
        <label>12</label>
    </ligand>
</feature>
<feature type="binding site" evidence="20">
    <location>
        <position position="6162"/>
    </location>
    <ligand>
        <name>Zn(2+)</name>
        <dbReference type="ChEBI" id="CHEBI:29105"/>
        <label>12</label>
    </ligand>
</feature>
<feature type="binding site" evidence="20">
    <location>
        <position position="6178"/>
    </location>
    <ligand>
        <name>Zn(2+)</name>
        <dbReference type="ChEBI" id="CHEBI:29105"/>
        <label>12</label>
    </ligand>
</feature>
<feature type="binding site" evidence="20">
    <location>
        <position position="6181"/>
    </location>
    <ligand>
        <name>Zn(2+)</name>
        <dbReference type="ChEBI" id="CHEBI:29105"/>
        <label>12</label>
    </ligand>
</feature>
<feature type="binding site" evidence="20">
    <location>
        <position position="6209"/>
    </location>
    <ligand>
        <name>Zn(2+)</name>
        <dbReference type="ChEBI" id="CHEBI:29105"/>
        <label>13</label>
    </ligand>
</feature>
<feature type="binding site" evidence="20">
    <location>
        <position position="6213"/>
    </location>
    <ligand>
        <name>Zn(2+)</name>
        <dbReference type="ChEBI" id="CHEBI:29105"/>
        <label>13</label>
    </ligand>
</feature>
<feature type="binding site" evidence="20">
    <location>
        <position position="6216"/>
    </location>
    <ligand>
        <name>Zn(2+)</name>
        <dbReference type="ChEBI" id="CHEBI:29105"/>
        <label>13</label>
    </ligand>
</feature>
<feature type="binding site" evidence="20">
    <location>
        <position position="6231"/>
    </location>
    <ligand>
        <name>Zn(2+)</name>
        <dbReference type="ChEBI" id="CHEBI:29105"/>
        <label>13</label>
    </ligand>
</feature>
<feature type="binding site" evidence="21">
    <location>
        <begin position="6283"/>
        <end position="6289"/>
    </location>
    <ligand>
        <name>S-adenosyl-L-methionine</name>
        <dbReference type="ChEBI" id="CHEBI:59789"/>
    </ligand>
</feature>
<feature type="binding site" evidence="21">
    <location>
        <position position="6399"/>
    </location>
    <ligand>
        <name>Zn(2+)</name>
        <dbReference type="ChEBI" id="CHEBI:29105"/>
        <label>14</label>
    </ligand>
</feature>
<feature type="binding site" evidence="21">
    <location>
        <position position="6421"/>
    </location>
    <ligand>
        <name>Zn(2+)</name>
        <dbReference type="ChEBI" id="CHEBI:29105"/>
        <label>14</label>
    </ligand>
</feature>
<feature type="binding site" evidence="21">
    <location>
        <position position="6432"/>
    </location>
    <ligand>
        <name>Zn(2+)</name>
        <dbReference type="ChEBI" id="CHEBI:29105"/>
        <label>14</label>
    </ligand>
</feature>
<feature type="binding site" evidence="21">
    <location>
        <position position="6435"/>
    </location>
    <ligand>
        <name>Zn(2+)</name>
        <dbReference type="ChEBI" id="CHEBI:29105"/>
        <label>14</label>
    </ligand>
</feature>
<feature type="site" description="Cleavage" evidence="4">
    <location>
        <begin position="195"/>
        <end position="196"/>
    </location>
</feature>
<feature type="site" description="Cleavage; by PL-PRO" evidence="4">
    <location>
        <begin position="847"/>
        <end position="848"/>
    </location>
</feature>
<feature type="site" description="Cleavage; by PL-PRO" evidence="4">
    <location>
        <begin position="2784"/>
        <end position="2785"/>
    </location>
</feature>
<feature type="site" description="Cleavage; by 3CL-PRO" evidence="4">
    <location>
        <begin position="3291"/>
        <end position="3292"/>
    </location>
</feature>
<feature type="site" description="Cleavage; by 3CL-PRO" evidence="4">
    <location>
        <begin position="3597"/>
        <end position="3598"/>
    </location>
</feature>
<feature type="site" description="Cleavage; by 3CL-PRO" evidence="4">
    <location>
        <begin position="3889"/>
        <end position="3890"/>
    </location>
</feature>
<feature type="site" description="Cleavage; by 3CL-PRO" evidence="4">
    <location>
        <begin position="3972"/>
        <end position="3973"/>
    </location>
</feature>
<feature type="site" description="Cleavage; by 3CL-PRO" evidence="4">
    <location>
        <begin position="4171"/>
        <end position="4172"/>
    </location>
</feature>
<feature type="site" description="Cleavage; by 3CL-PRO" evidence="4">
    <location>
        <begin position="4281"/>
        <end position="4282"/>
    </location>
</feature>
<feature type="site" description="Cleavage; by 3CL-PRO" evidence="4">
    <location>
        <begin position="4420"/>
        <end position="4421"/>
    </location>
</feature>
<feature type="site" description="Cleavage; by 3CL-PRO" evidence="4">
    <location>
        <begin position="5354"/>
        <end position="5355"/>
    </location>
</feature>
<feature type="site" description="Cleavage; by 3CL-PRO" evidence="4">
    <location>
        <begin position="5952"/>
        <end position="5953"/>
    </location>
</feature>
<feature type="site" description="Cleavage; by 3CL-PRO" evidence="4">
    <location>
        <begin position="6475"/>
        <end position="6476"/>
    </location>
</feature>
<feature type="site" description="Cleavage; by 3CL-PRO" evidence="4">
    <location>
        <begin position="6817"/>
        <end position="6818"/>
    </location>
</feature>
<feature type="disulfide bond" evidence="32">
    <location>
        <begin position="2275"/>
        <end position="2303"/>
    </location>
</feature>
<feature type="disulfide bond" evidence="32">
    <location>
        <begin position="2293"/>
        <end position="2300"/>
    </location>
</feature>
<feature type="strand" evidence="38">
    <location>
        <begin position="1158"/>
        <end position="1160"/>
    </location>
</feature>
<feature type="strand" evidence="38">
    <location>
        <begin position="1162"/>
        <end position="1170"/>
    </location>
</feature>
<feature type="helix" evidence="38">
    <location>
        <begin position="1172"/>
        <end position="1178"/>
    </location>
</feature>
<feature type="strand" evidence="38">
    <location>
        <begin position="1179"/>
        <end position="1181"/>
    </location>
</feature>
<feature type="strand" evidence="38">
    <location>
        <begin position="1183"/>
        <end position="1188"/>
    </location>
</feature>
<feature type="helix" evidence="38">
    <location>
        <begin position="1198"/>
        <end position="1205"/>
    </location>
</feature>
<feature type="turn" evidence="38">
    <location>
        <begin position="1206"/>
        <end position="1208"/>
    </location>
</feature>
<feature type="helix" evidence="38">
    <location>
        <begin position="1209"/>
        <end position="1221"/>
    </location>
</feature>
<feature type="strand" evidence="38">
    <location>
        <begin position="1229"/>
        <end position="1233"/>
    </location>
</feature>
<feature type="strand" evidence="38">
    <location>
        <begin position="1237"/>
        <end position="1245"/>
    </location>
</feature>
<feature type="helix" evidence="38">
    <location>
        <begin position="1249"/>
        <end position="1251"/>
    </location>
</feature>
<feature type="helix" evidence="38">
    <location>
        <begin position="1255"/>
        <end position="1257"/>
    </location>
</feature>
<feature type="helix" evidence="38">
    <location>
        <begin position="1258"/>
        <end position="1263"/>
    </location>
</feature>
<feature type="turn" evidence="38">
    <location>
        <begin position="1264"/>
        <end position="1267"/>
    </location>
</feature>
<feature type="strand" evidence="38">
    <location>
        <begin position="1268"/>
        <end position="1273"/>
    </location>
</feature>
<feature type="helix" evidence="38">
    <location>
        <begin position="1285"/>
        <end position="1295"/>
    </location>
</feature>
<feature type="strand" evidence="38">
    <location>
        <begin position="1298"/>
        <end position="1305"/>
    </location>
</feature>
<feature type="helix" evidence="38">
    <location>
        <begin position="1307"/>
        <end position="1314"/>
    </location>
</feature>
<feature type="helix" evidence="39">
    <location>
        <begin position="1450"/>
        <end position="1456"/>
    </location>
</feature>
<feature type="turn" evidence="39">
    <location>
        <begin position="1457"/>
        <end position="1459"/>
    </location>
</feature>
<feature type="strand" evidence="39">
    <location>
        <begin position="1460"/>
        <end position="1466"/>
    </location>
</feature>
<feature type="strand" evidence="39">
    <location>
        <begin position="1471"/>
        <end position="1473"/>
    </location>
</feature>
<feature type="strand" evidence="39">
    <location>
        <begin position="1476"/>
        <end position="1484"/>
    </location>
</feature>
<feature type="strand" evidence="39">
    <location>
        <begin position="1487"/>
        <end position="1491"/>
    </location>
</feature>
<feature type="strand" evidence="39">
    <location>
        <begin position="1496"/>
        <end position="1499"/>
    </location>
</feature>
<feature type="helix" evidence="39">
    <location>
        <begin position="1510"/>
        <end position="1514"/>
    </location>
</feature>
<feature type="turn" evidence="39">
    <location>
        <begin position="1515"/>
        <end position="1517"/>
    </location>
</feature>
<feature type="strand" evidence="39">
    <location>
        <begin position="1518"/>
        <end position="1520"/>
    </location>
</feature>
<feature type="helix" evidence="37">
    <location>
        <begin position="3302"/>
        <end position="3305"/>
    </location>
</feature>
<feature type="strand" evidence="37">
    <location>
        <begin position="3308"/>
        <end position="3313"/>
    </location>
</feature>
<feature type="strand" evidence="37">
    <location>
        <begin position="3316"/>
        <end position="3323"/>
    </location>
</feature>
<feature type="strand" evidence="37">
    <location>
        <begin position="3326"/>
        <end position="3330"/>
    </location>
</feature>
<feature type="helix" evidence="37">
    <location>
        <begin position="3331"/>
        <end position="3334"/>
    </location>
</feature>
<feature type="helix" evidence="37">
    <location>
        <begin position="3337"/>
        <end position="3339"/>
    </location>
</feature>
<feature type="strand" evidence="37">
    <location>
        <begin position="3340"/>
        <end position="3342"/>
    </location>
</feature>
<feature type="helix" evidence="37">
    <location>
        <begin position="3345"/>
        <end position="3351"/>
    </location>
</feature>
<feature type="helix" evidence="37">
    <location>
        <begin position="3354"/>
        <end position="3356"/>
    </location>
</feature>
<feature type="strand" evidence="37">
    <location>
        <begin position="3357"/>
        <end position="3361"/>
    </location>
</feature>
<feature type="strand" evidence="37">
    <location>
        <begin position="3363"/>
        <end position="3365"/>
    </location>
</feature>
<feature type="strand" evidence="37">
    <location>
        <begin position="3367"/>
        <end position="3369"/>
    </location>
</feature>
<feature type="strand" evidence="37">
    <location>
        <begin position="3371"/>
        <end position="3377"/>
    </location>
</feature>
<feature type="strand" evidence="37">
    <location>
        <begin position="3380"/>
        <end position="3387"/>
    </location>
</feature>
<feature type="strand" evidence="37">
    <location>
        <begin position="3394"/>
        <end position="3397"/>
    </location>
</feature>
<feature type="strand" evidence="37">
    <location>
        <begin position="3405"/>
        <end position="3412"/>
    </location>
</feature>
<feature type="strand" evidence="37">
    <location>
        <begin position="3415"/>
        <end position="3423"/>
    </location>
</feature>
<feature type="helix" evidence="37">
    <location>
        <begin position="3436"/>
        <end position="3438"/>
    </location>
</feature>
<feature type="strand" evidence="37">
    <location>
        <begin position="3442"/>
        <end position="3447"/>
    </location>
</feature>
<feature type="strand" evidence="37">
    <location>
        <begin position="3450"/>
        <end position="3462"/>
    </location>
</feature>
<feature type="strand" evidence="37">
    <location>
        <begin position="3465"/>
        <end position="3469"/>
    </location>
</feature>
<feature type="strand" evidence="37">
    <location>
        <begin position="3475"/>
        <end position="3478"/>
    </location>
</feature>
<feature type="strand" evidence="37">
    <location>
        <begin position="3481"/>
        <end position="3484"/>
    </location>
</feature>
<feature type="helix" evidence="37">
    <location>
        <begin position="3495"/>
        <end position="3507"/>
    </location>
</feature>
<feature type="helix" evidence="37">
    <location>
        <begin position="3521"/>
        <end position="3530"/>
    </location>
</feature>
<feature type="helix" evidence="37">
    <location>
        <begin position="3540"/>
        <end position="3549"/>
    </location>
</feature>
<feature type="helix" evidence="37">
    <location>
        <begin position="3553"/>
        <end position="3565"/>
    </location>
</feature>
<feature type="strand" evidence="37">
    <location>
        <begin position="3575"/>
        <end position="3577"/>
    </location>
</feature>
<feature type="helix" evidence="37">
    <location>
        <begin position="3584"/>
        <end position="3590"/>
    </location>
</feature>
<feature type="turn" evidence="36">
    <location>
        <begin position="3591"/>
        <end position="3593"/>
    </location>
</feature>
<gene>
    <name type="primary">rep</name>
    <name type="ORF">1a-1b</name>
</gene>
<comment type="function">
    <text evidence="2">The replicase polyprotein of coronaviruses is a multifunctional protein: it contains the activities necessary for the transcription of negative stranded RNA, leader RNA, subgenomic mRNAs and progeny virion RNA as well as proteinases responsible for the cleavage of the polyprotein into functional products.</text>
</comment>
<comment type="function">
    <molecule>Host translation inhibitor nsp1</molecule>
    <text evidence="2">Inhibits host translation by interacting with the 40S ribosomal subunit. The nsp1-40S ribosome complex further induces an endonucleolytic cleavage near the 5'UTR of host mRNAs, targeting them for degradation. Viral mRNAs are not susceptible to nsp1-mediated endonucleolytic RNA cleavage thanks to the presence of a 5'-end leader sequence and are therefore protected from degradation. By suppressing host gene expression, nsp1 facilitates efficient viral gene expression in infected cells and evasion from host immune response.</text>
</comment>
<comment type="function">
    <molecule>Non-structural protein 2</molecule>
    <text evidence="2">May play a role in the modulation of host cell survival signaling pathway by interacting with host PHB and PHB2. Indeed, these two proteins play a role in maintaining the functional integrity of the mitochondria and protecting cells from various stresses.</text>
</comment>
<comment type="function">
    <molecule>Papain-like proteinase nsp3</molecule>
    <text evidence="2">Responsible for the cleavages located at the N-terminus of the replicase polyprotein. In addition, PL-PRO possesses a deubiquitinating/deISGylating activity and processes both 'Lys-48'- and 'Lys-63'-linked polyubiquitin chains from cellular substrates. Participates together with nsp4 in the assembly of virally-induced cytoplasmic double-membrane vesicles necessary for viral replication. Antagonizes innate immune induction of type I interferon by blocking the phosphorylation, dimerization and subsequent nuclear translocation of host IRF3. Also prevents host NF-kappa-B signaling.</text>
</comment>
<comment type="function">
    <molecule>Non-structural protein 4</molecule>
    <text evidence="2">Participates in the assembly of virally-induced cytoplasmic double-membrane vesicles necessary for viral replication.</text>
</comment>
<comment type="function">
    <molecule>3C-like proteinase nsp5</molecule>
    <text evidence="2 9">Cleaves the C-terminus of replicase polyprotein at 11 sites. Recognizes substrates containing the core sequence [ILMVF]-Q-|-[SGACN]. Also able to bind an ADP-ribose-1''-phosphate (ADRP).</text>
</comment>
<comment type="function">
    <molecule>Non-structural protein 6</molecule>
    <text evidence="2">Plays a role in the initial induction of autophagosomes from host endoplasmic reticulum. Later, limits the expansion of these phagosomes that are no longer able to deliver viral components to lysosomes.</text>
</comment>
<comment type="function">
    <molecule>Non-structural protein 7</molecule>
    <text evidence="2">Forms a hexadecamer with nsp8 (8 subunits of each) that may participate in viral replication by acting as a primase. Alternatively, may synthesize substantially longer products than oligonucleotide primers.</text>
</comment>
<comment type="function">
    <molecule>Non-structural protein 8</molecule>
    <text evidence="2">Forms a hexadecamer with nsp7 (8 subunits of each) that may participate in viral replication by acting as a primase. Alternatively, may synthesize substantially longer products than oligonucleotide primers.</text>
</comment>
<comment type="function">
    <molecule>Viral protein genome-linked nsp9</molecule>
    <text evidence="3">Forms a primer, NSP9-pU, which is utilized by the polymerase for the initiation of RNA chains. Interacts with ribosome signal recognition particle RNA (SRP). Together with NSP8, suppress protein integration into the cell membrane, thereby disrupting host immune defenses.</text>
</comment>
<comment type="function">
    <molecule>Non-structural protein 10</molecule>
    <text evidence="2">Plays a pivotal role in viral transcription by stimulating both nsp14 3'-5' exoribonuclease and nsp16 2'-O-methyltransferase activities. Therefore plays an essential role in viral mRNAs cap methylation.</text>
</comment>
<comment type="function">
    <molecule>RNA-directed RNA polymerase nsp12</molecule>
    <text evidence="3">RNA-directed RNA polymerase that catalyzes the transcription of viral genomic and subgenomic RNAs. Acts in complex with nsp7 and nsp8 to transcribe both the minus and positive strands of genomic RNA. The kinase-like NiRAN domain of NSP12 attaches one or more nucleotides to the amino terminus of NSP9, forming a covalent RNA-protein intermediate that serves as transcription/replication primer. Subgenomic RNAs (sgRNAs) are formed by discontinuous transcription: The polymerase has the ability to pause at transcription-regulating sequences (TRS) and jump to the leader TRS, resulting in a major deletion. This creates a series of subgenomic RNAs that are replicated, transcribed and translated. In addition, Nsp12 is a subunit of the viral RNA capping enzyme that catalyzes the RNA guanylyltransferase reaction for genomic and sub-genomic RNAs. Subsequently, the NiRAN domain transfers RNA to GDP, and forms the core cap structure GpppA-RNA.</text>
</comment>
<comment type="function">
    <molecule>RNA-directed RNA polymerase nsp12</molecule>
    <text evidence="2">RNA-directed RNA polymerase that catalyzes the transcription of viral genomic and subgenomic RNAs. Acts in complex with nsp7 and nsp8 to transcribe both the minus and positive strands of genomic RNA. Subgenomic RNAs (sgRNAs) are formed by discontinuous transcription: The polymerase has the ability to pause at transcription-regulating sequences (TRS) and jump to the leader TRS, resulting in a major deletion. This creates a series of subgenomic RNAs that are replicated, transcribed and translated. In addition, Nsp12 is a subunit of the viral RNA capping enzyme that catalyzes the RNA guanylyltransferase reaction for genomic and sub-genomic RNAs. The kinase-like NiRAN domain of NSP12 transfers RNA to the amino terminus of NSP9, forming a covalent RNA-protein intermediate. Subsequently, the NiRAN domain transfers RNA to GDP, and forms the core cap structure GpppA-RNA.</text>
</comment>
<comment type="function">
    <molecule>Helicase nsp13</molecule>
    <text evidence="2">Multi-functional protein with a zinc-binding domain in N-terminus displaying RNA and DNA duplex-unwinding activities with 5' to 3' polarity. Activity of helicase is dependent on magnesium.</text>
</comment>
<comment type="function">
    <molecule>Guanine-N7 methyltransferase nsp14</molecule>
    <text evidence="2">Plays a role in viral RNA synthesis through two distinct activities. The N7-guanine methyltransferase activity plays a role in the formation of the cap structure GpppA-RNA. The proofreading exoribonuclease reduces the sensitivity of the virus to RNA mutagens during replication. This activity acts on both ssRNA and dsRNA in a 3'-5' direction.</text>
</comment>
<comment type="function">
    <molecule>Uridylate-specific endoribonuclease nsp15</molecule>
    <text evidence="2">Plays a role in viral transcription/replication and prevents the simultaneous activation of host cell dsRNA sensors, such as MDA5/IFIH1, OAS, and PKR (By similarity). Acts by degrading the 5'-polyuridines generated during replication of the poly(A) region of viral genomic and subgenomic RNAs. Catalyzes a two-step reaction in which a 2'3'-cyclic phosphate (2'3'-cP) is first generated by 2'-O transesterification, which is then hydrolyzed to a 3'-phosphate (3'-P) (By similarity). If not degraded, poly(U) RNA would hybridize with poly(A) RNA tails and activate host dsRNA sensors (By similarity).</text>
</comment>
<comment type="function">
    <molecule>2'-O-methyltransferase nsp16</molecule>
    <text evidence="2">Methyltransferase that mediates mRNA cap 2'-O-ribose methylation to the 5'-cap structure of viral mRNAs. N7-methyl guanosine cap is a prerequisite for binding of nsp16. Therefore plays an essential role in viral mRNAs cap methylation which is essential to evade immune system.</text>
</comment>
<comment type="catalytic activity">
    <molecule>RNA-directed RNA polymerase nsp12</molecule>
    <reaction evidence="8">
        <text>RNA(n) + a ribonucleoside 5'-triphosphate = RNA(n+1) + diphosphate</text>
        <dbReference type="Rhea" id="RHEA:21248"/>
        <dbReference type="Rhea" id="RHEA-COMP:14527"/>
        <dbReference type="Rhea" id="RHEA-COMP:17342"/>
        <dbReference type="ChEBI" id="CHEBI:33019"/>
        <dbReference type="ChEBI" id="CHEBI:61557"/>
        <dbReference type="ChEBI" id="CHEBI:140395"/>
        <dbReference type="EC" id="2.7.7.48"/>
    </reaction>
</comment>
<comment type="catalytic activity">
    <molecule>Helicase nsp13</molecule>
    <reaction>
        <text>ATP + H2O = ADP + phosphate + H(+)</text>
        <dbReference type="Rhea" id="RHEA:13065"/>
        <dbReference type="ChEBI" id="CHEBI:15377"/>
        <dbReference type="ChEBI" id="CHEBI:15378"/>
        <dbReference type="ChEBI" id="CHEBI:30616"/>
        <dbReference type="ChEBI" id="CHEBI:43474"/>
        <dbReference type="ChEBI" id="CHEBI:456216"/>
        <dbReference type="EC" id="3.6.4.12"/>
    </reaction>
</comment>
<comment type="catalytic activity">
    <molecule>Helicase nsp13</molecule>
    <reaction>
        <text>ATP + H2O = ADP + phosphate + H(+)</text>
        <dbReference type="Rhea" id="RHEA:13065"/>
        <dbReference type="ChEBI" id="CHEBI:15377"/>
        <dbReference type="ChEBI" id="CHEBI:15378"/>
        <dbReference type="ChEBI" id="CHEBI:30616"/>
        <dbReference type="ChEBI" id="CHEBI:43474"/>
        <dbReference type="ChEBI" id="CHEBI:456216"/>
        <dbReference type="EC" id="3.6.4.13"/>
    </reaction>
</comment>
<comment type="catalytic activity">
    <molecule>Papain-like proteinase nsp3</molecule>
    <reaction>
        <text>Thiol-dependent hydrolysis of ester, thioester, amide, peptide and isopeptide bonds formed by the C-terminal Gly of ubiquitin (a 76-residue protein attached to proteins as an intracellular targeting signal).</text>
        <dbReference type="EC" id="3.4.19.12"/>
    </reaction>
</comment>
<comment type="catalytic activity">
    <molecule>2'-O-methyltransferase nsp16</molecule>
    <reaction evidence="2">
        <text>a 5'-end (N(7)-methyl 5'-triphosphoguanosine)-ribonucleoside in mRNA + S-adenosyl-L-methionine = a 5'-end (N(7)-methyl 5'-triphosphoguanosine)-(2'-O-methyl-ribonucleoside) in mRNA + S-adenosyl-L-homocysteine + H(+)</text>
        <dbReference type="Rhea" id="RHEA:67020"/>
        <dbReference type="Rhea" id="RHEA-COMP:17167"/>
        <dbReference type="Rhea" id="RHEA-COMP:17168"/>
        <dbReference type="ChEBI" id="CHEBI:15378"/>
        <dbReference type="ChEBI" id="CHEBI:57856"/>
        <dbReference type="ChEBI" id="CHEBI:59789"/>
        <dbReference type="ChEBI" id="CHEBI:156461"/>
        <dbReference type="ChEBI" id="CHEBI:167609"/>
        <dbReference type="EC" id="2.1.1.57"/>
    </reaction>
</comment>
<comment type="catalytic activity">
    <molecule>Uridylate-specific endoribonuclease nsp15</molecule>
    <reaction evidence="2">
        <text>uridylyl-uridylyl-ribonucleotide-RNA = a 3'-end uridylyl-2',3'-cyclophospho-uridine-RNA + a 5'-end dephospho-ribonucleoside-RNA</text>
        <dbReference type="Rhea" id="RHEA:67732"/>
        <dbReference type="Rhea" id="RHEA-COMP:13936"/>
        <dbReference type="Rhea" id="RHEA-COMP:17334"/>
        <dbReference type="Rhea" id="RHEA-COMP:17335"/>
        <dbReference type="ChEBI" id="CHEBI:138284"/>
        <dbReference type="ChEBI" id="CHEBI:173079"/>
        <dbReference type="ChEBI" id="CHEBI:173080"/>
    </reaction>
</comment>
<comment type="catalytic activity">
    <molecule>RNA-directed RNA polymerase nsp12</molecule>
    <reaction evidence="3">
        <text>a 5'-end diphospho-ribonucleoside in mRNA + GTP + H(+) = a 5'-end (5'-triphosphoguanosine)-ribonucleoside in mRNA + diphosphate</text>
        <dbReference type="Rhea" id="RHEA:67012"/>
        <dbReference type="Rhea" id="RHEA-COMP:17165"/>
        <dbReference type="Rhea" id="RHEA-COMP:17166"/>
        <dbReference type="ChEBI" id="CHEBI:15378"/>
        <dbReference type="ChEBI" id="CHEBI:33019"/>
        <dbReference type="ChEBI" id="CHEBI:37565"/>
        <dbReference type="ChEBI" id="CHEBI:167616"/>
        <dbReference type="ChEBI" id="CHEBI:167617"/>
        <dbReference type="EC" id="2.7.7.50"/>
    </reaction>
    <physiologicalReaction direction="left-to-right" evidence="3">
        <dbReference type="Rhea" id="RHEA:67013"/>
    </physiologicalReaction>
</comment>
<comment type="catalytic activity">
    <molecule>Guanine-N7 methyltransferase nsp14</molecule>
    <reaction evidence="2">
        <text>a 5'-end (5'-triphosphoguanosine)-ribonucleoside in mRNA + S-adenosyl-L-methionine = a 5'-end (N(7)-methyl 5'-triphosphoguanosine)-ribonucleoside in mRNA + S-adenosyl-L-homocysteine</text>
        <dbReference type="Rhea" id="RHEA:67008"/>
        <dbReference type="Rhea" id="RHEA-COMP:17166"/>
        <dbReference type="Rhea" id="RHEA-COMP:17167"/>
        <dbReference type="ChEBI" id="CHEBI:57856"/>
        <dbReference type="ChEBI" id="CHEBI:59789"/>
        <dbReference type="ChEBI" id="CHEBI:156461"/>
        <dbReference type="ChEBI" id="CHEBI:167617"/>
        <dbReference type="EC" id="2.1.1.56"/>
    </reaction>
    <physiologicalReaction direction="left-to-right" evidence="2">
        <dbReference type="Rhea" id="RHEA:67009"/>
    </physiologicalReaction>
</comment>
<comment type="cofactor">
    <molecule>Uridylate-specific endoribonuclease nsp15</molecule>
    <cofactor evidence="2">
        <name>Mn(2+)</name>
        <dbReference type="ChEBI" id="CHEBI:29035"/>
    </cofactor>
    <text evidence="2">Likely affects Nsp15 binding to RNA.</text>
</comment>
<comment type="cofactor">
    <molecule>RNA-directed RNA polymerase nsp12</molecule>
    <cofactor evidence="3">
        <name>Mg(2+)</name>
        <dbReference type="ChEBI" id="CHEBI:18420"/>
    </cofactor>
</comment>
<comment type="subunit">
    <molecule>Non-structural protein 2</molecule>
    <text evidence="2">Interacts with host PHB and PHB2.</text>
</comment>
<comment type="subunit">
    <molecule>Non-structural protein 4</molecule>
    <text evidence="2">Interacts with papain-like protease nsp3 and non-structural protein 6.</text>
</comment>
<comment type="subunit">
    <molecule>3C-like proteinase nsp5</molecule>
    <text evidence="2">Monomer. Homodimer. Only the homodimer shows catalytic activity.</text>
</comment>
<comment type="subunit">
    <molecule>Non-structural protein 7</molecule>
    <text evidence="3">Interacts with nsp8 and nsp12 to form the replication-transcription complex (RTC): nsp12, nsp7, two subunits of nsp8, and up to two subunits of nsp13.</text>
</comment>
<comment type="subunit">
    <molecule>Non-structural protein 8</molecule>
    <text evidence="3">Interacts with nsp7, nsp13 and nsp12 to form the replication-transcription complex (RTC): nsp12, nsp7, two subunits of nsp8, and up to two subunits of nsp13.</text>
</comment>
<comment type="subunit">
    <molecule>Viral protein genome-linked nsp9</molecule>
    <text evidence="3">Interacts with nsp12.</text>
</comment>
<comment type="subunit">
    <molecule>Non-structural protein 10</molecule>
    <text evidence="3">Interacts with proofreading exoribonuclease nsp14 and 2'-O-methyltransferase nsp16; these interactions enhance nsp14 and nsp16 enzymatic activities.</text>
</comment>
<comment type="subunit">
    <molecule>RNA-directed RNA polymerase nsp12</molecule>
    <text evidence="3">Interacts with nsp7 and nsp8 to form the replication-transcription complex (RTC): nsp12, nsp7, two subunits of nsp8, and up to two subunits of nsp13. Interacts with nsp9.</text>
</comment>
<comment type="subunit">
    <molecule>Helicase nsp13</molecule>
    <text evidence="3">Interacts with nsp8 to form the replication-transcription complex (RTC): nsp12, nsp7, two subunits of nsp8, and up to two subunits of nsp13.</text>
</comment>
<comment type="subcellular location">
    <molecule>Papain-like proteinase nsp3</molecule>
    <subcellularLocation>
        <location>Host membrane</location>
        <topology>Multi-pass membrane protein</topology>
    </subcellularLocation>
    <subcellularLocation>
        <location evidence="2">Host cytoplasm</location>
    </subcellularLocation>
</comment>
<comment type="subcellular location">
    <molecule>Non-structural protein 4</molecule>
    <subcellularLocation>
        <location>Host membrane</location>
        <topology>Multi-pass membrane protein</topology>
    </subcellularLocation>
    <subcellularLocation>
        <location>Host cytoplasm</location>
    </subcellularLocation>
    <text evidence="2">Localizes in virally-induced cytoplasmic double-membrane vesicles.</text>
</comment>
<comment type="subcellular location">
    <molecule>Non-structural protein 6</molecule>
    <subcellularLocation>
        <location evidence="35">Host membrane</location>
        <topology evidence="35">Multi-pass membrane protein</topology>
    </subcellularLocation>
</comment>
<comment type="subcellular location">
    <molecule>Non-structural protein 7</molecule>
    <subcellularLocation>
        <location evidence="1">Host cytoplasm</location>
        <location evidence="1">Host perinuclear region</location>
    </subcellularLocation>
    <text evidence="1">nsp7, nsp8, nsp9 and nsp10 are localized in cytoplasmic foci, largely perinuclear. Late in infection, they merge into confluent complexes (By similarity).</text>
</comment>
<comment type="subcellular location">
    <molecule>Non-structural protein 8</molecule>
    <subcellularLocation>
        <location evidence="1">Host cytoplasm</location>
        <location evidence="1">Host perinuclear region</location>
    </subcellularLocation>
    <text evidence="1">nsp7, nsp8, nsp9 and nsp10 are localized in cytoplasmic foci, largely perinuclear. Late in infection, they merge into confluent complexes (By similarity).</text>
</comment>
<comment type="subcellular location">
    <molecule>Viral protein genome-linked nsp9</molecule>
    <subcellularLocation>
        <location evidence="1">Host cytoplasm</location>
        <location evidence="1">Host perinuclear region</location>
    </subcellularLocation>
    <text evidence="1">nsp7, nsp8, nsp9 and nsp10 are localized in cytoplasmic foci, largely perinuclear. Late in infection, they merge into confluent complexes (By similarity).</text>
</comment>
<comment type="subcellular location">
    <molecule>Non-structural protein 10</molecule>
    <subcellularLocation>
        <location evidence="1">Host cytoplasm</location>
        <location evidence="1">Host perinuclear region</location>
    </subcellularLocation>
    <text evidence="1">nsp7, nsp8, nsp9 and nsp10 are localized in cytoplasmic foci, largely perinuclear. Late in infection, they merge into confluent complexes (By similarity).</text>
</comment>
<comment type="subcellular location">
    <molecule>Helicase nsp13</molecule>
    <subcellularLocation>
        <location evidence="35">Host endoplasmic reticulum-Golgi intermediate compartment</location>
    </subcellularLocation>
    <text evidence="1">The helicase interacts with the N protein in membranous complexes and colocalizes with sites of synthesis of new viral RNA.</text>
</comment>
<comment type="subcellular location">
    <molecule>Uridylate-specific endoribonuclease nsp15</molecule>
    <subcellularLocation>
        <location evidence="1">Host cytoplasm</location>
        <location evidence="1">Host perinuclear region</location>
    </subcellularLocation>
</comment>
<comment type="alternative products">
    <event type="ribosomal frameshifting"/>
    <isoform>
        <id>P0C6W3-1</id>
        <name>Replicase polyprotein 1ab</name>
        <name>pp1ab</name>
        <sequence type="displayed"/>
    </isoform>
    <isoform>
        <id>P0C6T4-1</id>
        <name>Replicase polyprotein 1a</name>
        <name>pp1a</name>
        <name>ORF1a polyprotein</name>
        <sequence type="external"/>
    </isoform>
</comment>
<comment type="domain">
    <text evidence="1">The hydrophobic domains (HD) could mediate the membrane association of the replication complex and thereby alter the architecture of the host cell membrane.</text>
</comment>
<comment type="PTM">
    <text evidence="1">Specific enzymatic cleavages in vivo by its own proteases yield mature proteins. 3CL-PRO and PL-PRO proteinases are autocatalytically processed (By similarity).</text>
</comment>
<comment type="miscellaneous">
    <molecule>Isoform Replicase polyprotein 1ab</molecule>
    <text>Produced by -1 ribosomal frameshifting at the 1a-1b genes boundary.</text>
</comment>
<comment type="similarity">
    <text evidence="35">Belongs to the coronaviruses polyprotein 1ab family.</text>
</comment>
<dbReference type="EC" id="3.4.19.12"/>
<dbReference type="EC" id="3.4.22.-"/>
<dbReference type="EC" id="2.7.7.48"/>
<dbReference type="EC" id="2.7.7.50"/>
<dbReference type="EC" id="3.6.4.12"/>
<dbReference type="EC" id="3.6.4.13"/>
<dbReference type="EC" id="2.1.1.56"/>
<dbReference type="EC" id="3.1.13.-"/>
<dbReference type="EC" id="4.6.1.-"/>
<dbReference type="EC" id="2.1.1.57"/>
<dbReference type="EMBL" id="EF065505">
    <property type="protein sequence ID" value="ABN10838.1"/>
    <property type="molecule type" value="Genomic_RNA"/>
</dbReference>
<dbReference type="RefSeq" id="YP_001039952.1">
    <molecule id="P0C6W3-1"/>
    <property type="nucleotide sequence ID" value="NC_009019.1"/>
</dbReference>
<dbReference type="PDB" id="4YO9">
    <property type="method" value="X-ray"/>
    <property type="resolution" value="2.30 A"/>
    <property type="chains" value="A/B=3292-3597"/>
</dbReference>
<dbReference type="PDB" id="4YOG">
    <property type="method" value="X-ray"/>
    <property type="resolution" value="2.00 A"/>
    <property type="chains" value="A/B=3292-3597"/>
</dbReference>
<dbReference type="PDB" id="4YOI">
    <property type="method" value="X-ray"/>
    <property type="resolution" value="1.82 A"/>
    <property type="chains" value="A/B=3292-3597"/>
</dbReference>
<dbReference type="PDB" id="4YOJ">
    <property type="method" value="X-ray"/>
    <property type="resolution" value="1.90 A"/>
    <property type="chains" value="A/B=3292-3597"/>
</dbReference>
<dbReference type="PDB" id="6MEA">
    <property type="method" value="X-ray"/>
    <property type="resolution" value="1.35 A"/>
    <property type="chains" value="A/B=1154-1324"/>
</dbReference>
<dbReference type="PDB" id="6MEB">
    <property type="method" value="X-ray"/>
    <property type="resolution" value="1.80 A"/>
    <property type="chains" value="A/B=1154-1324"/>
</dbReference>
<dbReference type="PDB" id="6MEN">
    <property type="method" value="X-ray"/>
    <property type="resolution" value="1.50 A"/>
    <property type="chains" value="A/B=1154-1324"/>
</dbReference>
<dbReference type="PDB" id="6MWM">
    <property type="method" value="NMR"/>
    <property type="chains" value="A=1445-1522"/>
</dbReference>
<dbReference type="PDBsum" id="4YO9"/>
<dbReference type="PDBsum" id="4YOG"/>
<dbReference type="PDBsum" id="4YOI"/>
<dbReference type="PDBsum" id="4YOJ"/>
<dbReference type="PDBsum" id="6MEA"/>
<dbReference type="PDBsum" id="6MEB"/>
<dbReference type="PDBsum" id="6MEN"/>
<dbReference type="PDBsum" id="6MWM"/>
<dbReference type="SMR" id="P0C6W3"/>
<dbReference type="BindingDB" id="P0C6W3"/>
<dbReference type="MEROPS" id="C16.011"/>
<dbReference type="KEGG" id="vg:4835998"/>
<dbReference type="SABIO-RK" id="P0C6W3"/>
<dbReference type="EvolutionaryTrace" id="P0C6W3"/>
<dbReference type="Proteomes" id="UP000006574">
    <property type="component" value="Genome"/>
</dbReference>
<dbReference type="GO" id="GO:0044172">
    <property type="term" value="C:host cell endoplasmic reticulum-Golgi intermediate compartment"/>
    <property type="evidence" value="ECO:0007669"/>
    <property type="project" value="UniProtKB-SubCell"/>
</dbReference>
<dbReference type="GO" id="GO:0033644">
    <property type="term" value="C:host cell membrane"/>
    <property type="evidence" value="ECO:0007669"/>
    <property type="project" value="UniProtKB-SubCell"/>
</dbReference>
<dbReference type="GO" id="GO:0044220">
    <property type="term" value="C:host cell perinuclear region of cytoplasm"/>
    <property type="evidence" value="ECO:0007669"/>
    <property type="project" value="UniProtKB-SubCell"/>
</dbReference>
<dbReference type="GO" id="GO:0016020">
    <property type="term" value="C:membrane"/>
    <property type="evidence" value="ECO:0007669"/>
    <property type="project" value="UniProtKB-KW"/>
</dbReference>
<dbReference type="GO" id="GO:0000175">
    <property type="term" value="F:3'-5'-RNA exonuclease activity"/>
    <property type="evidence" value="ECO:0007669"/>
    <property type="project" value="InterPro"/>
</dbReference>
<dbReference type="GO" id="GO:0043139">
    <property type="term" value="F:5'-3' DNA helicase activity"/>
    <property type="evidence" value="ECO:0007669"/>
    <property type="project" value="TreeGrafter"/>
</dbReference>
<dbReference type="GO" id="GO:0005524">
    <property type="term" value="F:ATP binding"/>
    <property type="evidence" value="ECO:0007669"/>
    <property type="project" value="UniProtKB-KW"/>
</dbReference>
<dbReference type="GO" id="GO:0016887">
    <property type="term" value="F:ATP hydrolysis activity"/>
    <property type="evidence" value="ECO:0007669"/>
    <property type="project" value="RHEA"/>
</dbReference>
<dbReference type="GO" id="GO:0004843">
    <property type="term" value="F:cysteine-type deubiquitinase activity"/>
    <property type="evidence" value="ECO:0007669"/>
    <property type="project" value="UniProtKB-EC"/>
</dbReference>
<dbReference type="GO" id="GO:0004197">
    <property type="term" value="F:cysteine-type endopeptidase activity"/>
    <property type="evidence" value="ECO:0007669"/>
    <property type="project" value="InterPro"/>
</dbReference>
<dbReference type="GO" id="GO:0004519">
    <property type="term" value="F:endonuclease activity"/>
    <property type="evidence" value="ECO:0007669"/>
    <property type="project" value="UniProtKB-KW"/>
</dbReference>
<dbReference type="GO" id="GO:0002151">
    <property type="term" value="F:G-quadruplex RNA binding"/>
    <property type="evidence" value="ECO:0007669"/>
    <property type="project" value="InterPro"/>
</dbReference>
<dbReference type="GO" id="GO:0016829">
    <property type="term" value="F:lyase activity"/>
    <property type="evidence" value="ECO:0007669"/>
    <property type="project" value="UniProtKB-KW"/>
</dbReference>
<dbReference type="GO" id="GO:0004483">
    <property type="term" value="F:mRNA (nucleoside-2'-O-)-methyltransferase activity"/>
    <property type="evidence" value="ECO:0007669"/>
    <property type="project" value="InterPro"/>
</dbReference>
<dbReference type="GO" id="GO:0004482">
    <property type="term" value="F:mRNA 5'-cap (guanine-N7-)-methyltransferase activity"/>
    <property type="evidence" value="ECO:0007669"/>
    <property type="project" value="InterPro"/>
</dbReference>
<dbReference type="GO" id="GO:0008242">
    <property type="term" value="F:omega peptidase activity"/>
    <property type="evidence" value="ECO:0007669"/>
    <property type="project" value="InterPro"/>
</dbReference>
<dbReference type="GO" id="GO:0003724">
    <property type="term" value="F:RNA helicase activity"/>
    <property type="evidence" value="ECO:0007669"/>
    <property type="project" value="UniProtKB-EC"/>
</dbReference>
<dbReference type="GO" id="GO:0003968">
    <property type="term" value="F:RNA-directed RNA polymerase activity"/>
    <property type="evidence" value="ECO:0007669"/>
    <property type="project" value="UniProtKB-KW"/>
</dbReference>
<dbReference type="GO" id="GO:0003727">
    <property type="term" value="F:single-stranded RNA binding"/>
    <property type="evidence" value="ECO:0007669"/>
    <property type="project" value="InterPro"/>
</dbReference>
<dbReference type="GO" id="GO:0008270">
    <property type="term" value="F:zinc ion binding"/>
    <property type="evidence" value="ECO:0007669"/>
    <property type="project" value="UniProtKB-KW"/>
</dbReference>
<dbReference type="GO" id="GO:0006351">
    <property type="term" value="P:DNA-templated transcription"/>
    <property type="evidence" value="ECO:0007669"/>
    <property type="project" value="InterPro"/>
</dbReference>
<dbReference type="GO" id="GO:0006508">
    <property type="term" value="P:proteolysis"/>
    <property type="evidence" value="ECO:0007669"/>
    <property type="project" value="UniProtKB-KW"/>
</dbReference>
<dbReference type="GO" id="GO:0010506">
    <property type="term" value="P:regulation of autophagy"/>
    <property type="evidence" value="ECO:0007669"/>
    <property type="project" value="InterPro"/>
</dbReference>
<dbReference type="GO" id="GO:0039520">
    <property type="term" value="P:symbiont-mediated activation of host autophagy"/>
    <property type="evidence" value="ECO:0007669"/>
    <property type="project" value="UniProtKB-KW"/>
</dbReference>
<dbReference type="GO" id="GO:0039595">
    <property type="term" value="P:symbiont-mediated degradation of host mRNA"/>
    <property type="evidence" value="ECO:0007669"/>
    <property type="project" value="UniProtKB-KW"/>
</dbReference>
<dbReference type="GO" id="GO:0039648">
    <property type="term" value="P:symbiont-mediated perturbation of host ubiquitin-like protein modification"/>
    <property type="evidence" value="ECO:0007669"/>
    <property type="project" value="UniProtKB-KW"/>
</dbReference>
<dbReference type="GO" id="GO:0039657">
    <property type="term" value="P:symbiont-mediated suppression of host gene expression"/>
    <property type="evidence" value="ECO:0007669"/>
    <property type="project" value="UniProtKB-KW"/>
</dbReference>
<dbReference type="GO" id="GO:0039579">
    <property type="term" value="P:symbiont-mediated suppression of host ISG15-protein conjugation"/>
    <property type="evidence" value="ECO:0007669"/>
    <property type="project" value="UniProtKB-KW"/>
</dbReference>
<dbReference type="GO" id="GO:0085034">
    <property type="term" value="P:symbiont-mediated suppression of host NF-kappaB cascade"/>
    <property type="evidence" value="ECO:0007669"/>
    <property type="project" value="UniProtKB-KW"/>
</dbReference>
<dbReference type="GO" id="GO:0039502">
    <property type="term" value="P:symbiont-mediated suppression of host type I interferon-mediated signaling pathway"/>
    <property type="evidence" value="ECO:0007669"/>
    <property type="project" value="UniProtKB-KW"/>
</dbReference>
<dbReference type="GO" id="GO:0019082">
    <property type="term" value="P:viral protein processing"/>
    <property type="evidence" value="ECO:0007669"/>
    <property type="project" value="InterPro"/>
</dbReference>
<dbReference type="GO" id="GO:0039694">
    <property type="term" value="P:viral RNA genome replication"/>
    <property type="evidence" value="ECO:0007669"/>
    <property type="project" value="InterPro"/>
</dbReference>
<dbReference type="GO" id="GO:0075523">
    <property type="term" value="P:viral translational frameshifting"/>
    <property type="evidence" value="ECO:0007669"/>
    <property type="project" value="UniProtKB-KW"/>
</dbReference>
<dbReference type="CDD" id="cd21409">
    <property type="entry name" value="1B_cv_Nsp13-like"/>
    <property type="match status" value="1"/>
</dbReference>
<dbReference type="CDD" id="cd21901">
    <property type="entry name" value="alpha_betaCoV_Nsp10"/>
    <property type="match status" value="1"/>
</dbReference>
<dbReference type="CDD" id="cd21560">
    <property type="entry name" value="betaCoV-Nsp6"/>
    <property type="match status" value="1"/>
</dbReference>
<dbReference type="CDD" id="cd21722">
    <property type="entry name" value="betaCoV_Nsp13-helicase"/>
    <property type="match status" value="1"/>
</dbReference>
<dbReference type="CDD" id="cd21659">
    <property type="entry name" value="betaCoV_Nsp14"/>
    <property type="match status" value="1"/>
</dbReference>
<dbReference type="CDD" id="cd21666">
    <property type="entry name" value="betaCoV_Nsp5_Mpro"/>
    <property type="match status" value="1"/>
</dbReference>
<dbReference type="CDD" id="cd21827">
    <property type="entry name" value="betaCoV_Nsp7"/>
    <property type="match status" value="1"/>
</dbReference>
<dbReference type="CDD" id="cd21831">
    <property type="entry name" value="betaCoV_Nsp8"/>
    <property type="match status" value="1"/>
</dbReference>
<dbReference type="CDD" id="cd21898">
    <property type="entry name" value="betaCoV_Nsp9"/>
    <property type="match status" value="1"/>
</dbReference>
<dbReference type="CDD" id="cd21732">
    <property type="entry name" value="betaCoV_PLPro"/>
    <property type="match status" value="1"/>
</dbReference>
<dbReference type="CDD" id="cd23528">
    <property type="entry name" value="capping_2-OMTase_betaCoV_Nsp16"/>
    <property type="match status" value="1"/>
</dbReference>
<dbReference type="CDD" id="cd21473">
    <property type="entry name" value="cv_Nsp4_TM"/>
    <property type="match status" value="1"/>
</dbReference>
<dbReference type="CDD" id="cd21167">
    <property type="entry name" value="M_alpha_beta_cv_Nsp15-like"/>
    <property type="match status" value="1"/>
</dbReference>
<dbReference type="CDD" id="cd21563">
    <property type="entry name" value="Macro_cv_SUD-M_Nsp3-like"/>
    <property type="match status" value="1"/>
</dbReference>
<dbReference type="CDD" id="cd21557">
    <property type="entry name" value="Macro_X_Nsp3-like"/>
    <property type="match status" value="1"/>
</dbReference>
<dbReference type="CDD" id="cd21878">
    <property type="entry name" value="MERS-CoV-like_Nsp1"/>
    <property type="match status" value="1"/>
</dbReference>
<dbReference type="CDD" id="cd21815">
    <property type="entry name" value="MERS-CoV-like_Nsp3_betaSM"/>
    <property type="match status" value="1"/>
</dbReference>
<dbReference type="CDD" id="cd21823">
    <property type="entry name" value="MERS-CoV-like_Nsp3_NAB"/>
    <property type="match status" value="1"/>
</dbReference>
<dbReference type="CDD" id="cd21592">
    <property type="entry name" value="MERS-CoV-like_RdRp"/>
    <property type="match status" value="1"/>
</dbReference>
<dbReference type="CDD" id="cd21161">
    <property type="entry name" value="NendoU_cv_Nsp15-like"/>
    <property type="match status" value="1"/>
</dbReference>
<dbReference type="CDD" id="cd21171">
    <property type="entry name" value="NTD_alpha_betaCoV_Nsp15-like"/>
    <property type="match status" value="1"/>
</dbReference>
<dbReference type="CDD" id="cd21689">
    <property type="entry name" value="stalk_CoV_Nsp13-like"/>
    <property type="match status" value="1"/>
</dbReference>
<dbReference type="CDD" id="cd21523">
    <property type="entry name" value="SUD_C_MERS-CoV_Nsp3"/>
    <property type="match status" value="1"/>
</dbReference>
<dbReference type="CDD" id="cd21716">
    <property type="entry name" value="TM_Y_MERS-CoV-like_Nsp3_C"/>
    <property type="match status" value="1"/>
</dbReference>
<dbReference type="CDD" id="cd21467">
    <property type="entry name" value="Ubl1_cv_Nsp3_N-like"/>
    <property type="match status" value="1"/>
</dbReference>
<dbReference type="CDD" id="cd21401">
    <property type="entry name" value="ZBD_cv_Nsp13-like"/>
    <property type="match status" value="1"/>
</dbReference>
<dbReference type="FunFam" id="3.40.50.150:FF:000162">
    <property type="entry name" value="Orf1ab polyprotein"/>
    <property type="match status" value="1"/>
</dbReference>
<dbReference type="FunFam" id="3.40.50.300:FF:001139">
    <property type="entry name" value="Orf1ab polyprotein"/>
    <property type="match status" value="1"/>
</dbReference>
<dbReference type="FunFam" id="1.10.150.420:FF:000001">
    <property type="entry name" value="Replicase polyprotein"/>
    <property type="match status" value="1"/>
</dbReference>
<dbReference type="FunFam" id="2.40.10.10:FF:000045">
    <property type="entry name" value="Replicase polyprotein 1a"/>
    <property type="match status" value="1"/>
</dbReference>
<dbReference type="Gene3D" id="1.10.8.1190">
    <property type="match status" value="1"/>
</dbReference>
<dbReference type="Gene3D" id="2.60.120.1680">
    <property type="match status" value="1"/>
</dbReference>
<dbReference type="Gene3D" id="3.10.20.350">
    <property type="match status" value="1"/>
</dbReference>
<dbReference type="Gene3D" id="3.10.20.540">
    <property type="match status" value="1"/>
</dbReference>
<dbReference type="Gene3D" id="3.40.50.11580">
    <property type="match status" value="1"/>
</dbReference>
<dbReference type="Gene3D" id="6.10.140.2090">
    <property type="match status" value="1"/>
</dbReference>
<dbReference type="Gene3D" id="1.10.150.420">
    <property type="entry name" value="Coronavirus nonstructural protein 4 C-terminus"/>
    <property type="match status" value="1"/>
</dbReference>
<dbReference type="Gene3D" id="3.40.220.10">
    <property type="entry name" value="Leucine Aminopeptidase, subunit E, domain 1"/>
    <property type="match status" value="1"/>
</dbReference>
<dbReference type="Gene3D" id="1.10.1840.10">
    <property type="entry name" value="main proteinase (3clpro) structure, domain 3"/>
    <property type="match status" value="1"/>
</dbReference>
<dbReference type="Gene3D" id="3.30.160.820">
    <property type="entry name" value="Nsp15 N-terminal domain-like"/>
    <property type="match status" value="1"/>
</dbReference>
<dbReference type="Gene3D" id="3.40.220.20">
    <property type="entry name" value="Nsp3, SUD-M subdomain"/>
    <property type="match status" value="1"/>
</dbReference>
<dbReference type="Gene3D" id="1.10.8.370">
    <property type="entry name" value="nsp7 replicase"/>
    <property type="match status" value="1"/>
</dbReference>
<dbReference type="Gene3D" id="3.30.70.3540">
    <property type="entry name" value="Nsp8 replicase, head domain"/>
    <property type="match status" value="1"/>
</dbReference>
<dbReference type="Gene3D" id="3.40.50.300">
    <property type="entry name" value="P-loop containing nucleotide triphosphate hydrolases"/>
    <property type="match status" value="2"/>
</dbReference>
<dbReference type="Gene3D" id="2.40.10.250">
    <property type="entry name" value="Replicase NSP9"/>
    <property type="match status" value="1"/>
</dbReference>
<dbReference type="Gene3D" id="3.40.50.11020">
    <property type="entry name" value="Replicase polyprotein, nucleic acid-binding domain"/>
    <property type="match status" value="1"/>
</dbReference>
<dbReference type="Gene3D" id="2.40.10.10">
    <property type="entry name" value="Trypsin-like serine proteases"/>
    <property type="match status" value="2"/>
</dbReference>
<dbReference type="Gene3D" id="3.40.50.150">
    <property type="entry name" value="Vaccinia Virus protein VP39"/>
    <property type="match status" value="1"/>
</dbReference>
<dbReference type="InterPro" id="IPR027351">
    <property type="entry name" value="(+)RNA_virus_helicase_core_dom"/>
</dbReference>
<dbReference type="InterPro" id="IPR046443">
    <property type="entry name" value="a/bCoV_NSP1_glob"/>
</dbReference>
<dbReference type="InterPro" id="IPR046440">
    <property type="entry name" value="AV_NSP11N_COV_NSP15M"/>
</dbReference>
<dbReference type="InterPro" id="IPR046442">
    <property type="entry name" value="bCoV_NSP1_C"/>
</dbReference>
<dbReference type="InterPro" id="IPR050534">
    <property type="entry name" value="Coronavir_polyprotein_1ab"/>
</dbReference>
<dbReference type="InterPro" id="IPR043608">
    <property type="entry name" value="CoV_NSP15_M"/>
</dbReference>
<dbReference type="InterPro" id="IPR043606">
    <property type="entry name" value="CoV_NSP15_N"/>
</dbReference>
<dbReference type="InterPro" id="IPR043613">
    <property type="entry name" value="CoV_NSP2_C"/>
</dbReference>
<dbReference type="InterPro" id="IPR047573">
    <property type="entry name" value="CoV_NSP2_M"/>
</dbReference>
<dbReference type="InterPro" id="IPR049894">
    <property type="entry name" value="COV_NSP3_3ECTO"/>
</dbReference>
<dbReference type="InterPro" id="IPR043611">
    <property type="entry name" value="CoV_NSP3_C"/>
</dbReference>
<dbReference type="InterPro" id="IPR047566">
    <property type="entry name" value="CoV_NSP3_Y"/>
</dbReference>
<dbReference type="InterPro" id="IPR032505">
    <property type="entry name" value="CoV_NSP4_C"/>
</dbReference>
<dbReference type="InterPro" id="IPR043612">
    <property type="entry name" value="CoV_NSP4_N"/>
</dbReference>
<dbReference type="InterPro" id="IPR043502">
    <property type="entry name" value="DNA/RNA_pol_sf"/>
</dbReference>
<dbReference type="InterPro" id="IPR041679">
    <property type="entry name" value="DNA2/NAM7-like_C"/>
</dbReference>
<dbReference type="InterPro" id="IPR022733">
    <property type="entry name" value="DPUP_SUD_C_bCoV"/>
</dbReference>
<dbReference type="InterPro" id="IPR037227">
    <property type="entry name" value="EndoU-like"/>
</dbReference>
<dbReference type="InterPro" id="IPR002589">
    <property type="entry name" value="Macro_dom"/>
</dbReference>
<dbReference type="InterPro" id="IPR043472">
    <property type="entry name" value="Macro_dom-like"/>
</dbReference>
<dbReference type="InterPro" id="IPR044371">
    <property type="entry name" value="Macro_X_NSP3-like"/>
</dbReference>
<dbReference type="InterPro" id="IPR046435">
    <property type="entry name" value="N7_MTase_CoV"/>
</dbReference>
<dbReference type="InterPro" id="IPR043609">
    <property type="entry name" value="NendoU_nidovirus"/>
</dbReference>
<dbReference type="InterPro" id="IPR044863">
    <property type="entry name" value="NIRAN"/>
</dbReference>
<dbReference type="InterPro" id="IPR046438">
    <property type="entry name" value="NIV_2_O_MTASE"/>
</dbReference>
<dbReference type="InterPro" id="IPR046436">
    <property type="entry name" value="NIV_EXON"/>
</dbReference>
<dbReference type="InterPro" id="IPR036333">
    <property type="entry name" value="NSP10_sf_CoV"/>
</dbReference>
<dbReference type="InterPro" id="IPR047570">
    <property type="entry name" value="NSP12_IF_CoV"/>
</dbReference>
<dbReference type="InterPro" id="IPR044343">
    <property type="entry name" value="NSP13_1B_dom_CoV"/>
</dbReference>
<dbReference type="InterPro" id="IPR048673">
    <property type="entry name" value="NSP13_stalk_CoV"/>
</dbReference>
<dbReference type="InterPro" id="IPR048672">
    <property type="entry name" value="NSP13_ZBD_CoV"/>
</dbReference>
<dbReference type="InterPro" id="IPR027352">
    <property type="entry name" value="NSP13_ZBD_CoV-like"/>
</dbReference>
<dbReference type="InterPro" id="IPR044315">
    <property type="entry name" value="NSP14_betaCoV"/>
</dbReference>
<dbReference type="InterPro" id="IPR009466">
    <property type="entry name" value="NSP14_CoV"/>
</dbReference>
<dbReference type="InterPro" id="IPR044330">
    <property type="entry name" value="NSP15_alpha_betaCoV_N"/>
</dbReference>
<dbReference type="InterPro" id="IPR044322">
    <property type="entry name" value="NSP15_M_alpha_beta_CoV"/>
</dbReference>
<dbReference type="InterPro" id="IPR043174">
    <property type="entry name" value="NSP15_middle_sf"/>
</dbReference>
<dbReference type="InterPro" id="IPR042515">
    <property type="entry name" value="NSP15_N_CoV"/>
</dbReference>
<dbReference type="InterPro" id="IPR044401">
    <property type="entry name" value="NSP15_NendoU_CoV"/>
</dbReference>
<dbReference type="InterPro" id="IPR009461">
    <property type="entry name" value="NSP16_CoV-like"/>
</dbReference>
<dbReference type="InterPro" id="IPR021590">
    <property type="entry name" value="NSP1_glob_bCoV"/>
</dbReference>
<dbReference type="InterPro" id="IPR043615">
    <property type="entry name" value="NSP2_N_CoV"/>
</dbReference>
<dbReference type="InterPro" id="IPR024375">
    <property type="entry name" value="NSP3_bCoV"/>
</dbReference>
<dbReference type="InterPro" id="IPR047567">
    <property type="entry name" value="NSP3_G2M_bCoV"/>
</dbReference>
<dbReference type="InterPro" id="IPR032592">
    <property type="entry name" value="NSP3_NAB_bCoV"/>
</dbReference>
<dbReference type="InterPro" id="IPR042570">
    <property type="entry name" value="NSP3_NAB_bCoV_sf"/>
</dbReference>
<dbReference type="InterPro" id="IPR038400">
    <property type="entry name" value="NSP3_SUD-M_sf_bCoV"/>
</dbReference>
<dbReference type="InterPro" id="IPR044382">
    <property type="entry name" value="NSP3_SUD_C_MERS-CoV"/>
</dbReference>
<dbReference type="InterPro" id="IPR044357">
    <property type="entry name" value="NSP3_Ubl1_dom_CoV"/>
</dbReference>
<dbReference type="InterPro" id="IPR044353">
    <property type="entry name" value="Nsp3_Ubl2_dom_CoV"/>
</dbReference>
<dbReference type="InterPro" id="IPR038083">
    <property type="entry name" value="NSP3A-like"/>
</dbReference>
<dbReference type="InterPro" id="IPR038123">
    <property type="entry name" value="NSP4_C_sf_CoV"/>
</dbReference>
<dbReference type="InterPro" id="IPR044367">
    <property type="entry name" value="NSP6_betaCoV"/>
</dbReference>
<dbReference type="InterPro" id="IPR043610">
    <property type="entry name" value="NSP6_CoV"/>
</dbReference>
<dbReference type="InterPro" id="IPR014828">
    <property type="entry name" value="NSP7_CoV"/>
</dbReference>
<dbReference type="InterPro" id="IPR037204">
    <property type="entry name" value="NSP7_sf_CoV"/>
</dbReference>
<dbReference type="InterPro" id="IPR014829">
    <property type="entry name" value="NSP8_CoV"/>
</dbReference>
<dbReference type="InterPro" id="IPR037230">
    <property type="entry name" value="NSP8_sf_CoV"/>
</dbReference>
<dbReference type="InterPro" id="IPR014822">
    <property type="entry name" value="NSP9_CoV"/>
</dbReference>
<dbReference type="InterPro" id="IPR036499">
    <property type="entry name" value="NSP9_sf_CoV"/>
</dbReference>
<dbReference type="InterPro" id="IPR027417">
    <property type="entry name" value="P-loop_NTPase"/>
</dbReference>
<dbReference type="InterPro" id="IPR013016">
    <property type="entry name" value="Peptidase_C16_CoV"/>
</dbReference>
<dbReference type="InterPro" id="IPR008740">
    <property type="entry name" value="Peptidase_C30_CoV"/>
</dbReference>
<dbReference type="InterPro" id="IPR043477">
    <property type="entry name" value="Peptidase_C30_dom3_CoV"/>
</dbReference>
<dbReference type="InterPro" id="IPR009003">
    <property type="entry name" value="Peptidase_S1_PA"/>
</dbReference>
<dbReference type="InterPro" id="IPR043504">
    <property type="entry name" value="Peptidase_S1_PA_chymotrypsin"/>
</dbReference>
<dbReference type="InterPro" id="IPR043177">
    <property type="entry name" value="PLpro_N_sf_CoV"/>
</dbReference>
<dbReference type="InterPro" id="IPR043503">
    <property type="entry name" value="PLpro_palm_finger_dom_CoV"/>
</dbReference>
<dbReference type="InterPro" id="IPR043178">
    <property type="entry name" value="PLpro_thumb_sf_CoV"/>
</dbReference>
<dbReference type="InterPro" id="IPR046441">
    <property type="entry name" value="RdRp_CoV"/>
</dbReference>
<dbReference type="InterPro" id="IPR044350">
    <property type="entry name" value="RdRp_MERS-CoV-like"/>
</dbReference>
<dbReference type="InterPro" id="IPR009469">
    <property type="entry name" value="RdRp_N_CoV"/>
</dbReference>
<dbReference type="InterPro" id="IPR001205">
    <property type="entry name" value="RNA-dir_pol_C"/>
</dbReference>
<dbReference type="InterPro" id="IPR007094">
    <property type="entry name" value="RNA-dir_pol_PSvirus"/>
</dbReference>
<dbReference type="InterPro" id="IPR018995">
    <property type="entry name" value="RNA_synth_NSP10_CoV"/>
</dbReference>
<dbReference type="InterPro" id="IPR029063">
    <property type="entry name" value="SAM-dependent_MTases_sf"/>
</dbReference>
<dbReference type="PANTHER" id="PTHR43788:SF8">
    <property type="entry name" value="DNA-BINDING PROTEIN SMUBP-2"/>
    <property type="match status" value="1"/>
</dbReference>
<dbReference type="PANTHER" id="PTHR43788">
    <property type="entry name" value="DNA2/NAM7 HELICASE FAMILY MEMBER"/>
    <property type="match status" value="1"/>
</dbReference>
<dbReference type="Pfam" id="PF13087">
    <property type="entry name" value="AAA_12"/>
    <property type="match status" value="1"/>
</dbReference>
<dbReference type="Pfam" id="PF13604">
    <property type="entry name" value="AAA_30"/>
    <property type="match status" value="1"/>
</dbReference>
<dbReference type="Pfam" id="PF16251">
    <property type="entry name" value="bCoV_NAB"/>
    <property type="match status" value="1"/>
</dbReference>
<dbReference type="Pfam" id="PF11501">
    <property type="entry name" value="bCoV_NSP1"/>
    <property type="match status" value="1"/>
</dbReference>
<dbReference type="Pfam" id="PF11633">
    <property type="entry name" value="bCoV_SUD_M"/>
    <property type="match status" value="1"/>
</dbReference>
<dbReference type="Pfam" id="PF06471">
    <property type="entry name" value="CoV_ExoN"/>
    <property type="match status" value="1"/>
</dbReference>
<dbReference type="Pfam" id="PF06460">
    <property type="entry name" value="CoV_Methyltr_2"/>
    <property type="match status" value="1"/>
</dbReference>
<dbReference type="Pfam" id="PF09401">
    <property type="entry name" value="CoV_NSP10"/>
    <property type="match status" value="1"/>
</dbReference>
<dbReference type="Pfam" id="PF20631">
    <property type="entry name" value="CoV_NSP13_1B"/>
    <property type="match status" value="1"/>
</dbReference>
<dbReference type="Pfam" id="PF20633">
    <property type="entry name" value="CoV_NSP13_stalk"/>
    <property type="match status" value="1"/>
</dbReference>
<dbReference type="Pfam" id="PF20632">
    <property type="entry name" value="CoV_NSP13_ZBD"/>
    <property type="match status" value="1"/>
</dbReference>
<dbReference type="Pfam" id="PF19215">
    <property type="entry name" value="CoV_NSP15_C"/>
    <property type="match status" value="1"/>
</dbReference>
<dbReference type="Pfam" id="PF19216">
    <property type="entry name" value="CoV_NSP15_M"/>
    <property type="match status" value="1"/>
</dbReference>
<dbReference type="Pfam" id="PF19219">
    <property type="entry name" value="CoV_NSP15_N"/>
    <property type="match status" value="1"/>
</dbReference>
<dbReference type="Pfam" id="PF19212">
    <property type="entry name" value="CoV_NSP2_C"/>
    <property type="match status" value="1"/>
</dbReference>
<dbReference type="Pfam" id="PF19211">
    <property type="entry name" value="CoV_NSP2_N"/>
    <property type="match status" value="1"/>
</dbReference>
<dbReference type="Pfam" id="PF19218">
    <property type="entry name" value="CoV_NSP3_C"/>
    <property type="match status" value="1"/>
</dbReference>
<dbReference type="Pfam" id="PF16348">
    <property type="entry name" value="CoV_NSP4_C"/>
    <property type="match status" value="1"/>
</dbReference>
<dbReference type="Pfam" id="PF19217">
    <property type="entry name" value="CoV_NSP4_N"/>
    <property type="match status" value="1"/>
</dbReference>
<dbReference type="Pfam" id="PF19213">
    <property type="entry name" value="CoV_NSP6"/>
    <property type="match status" value="1"/>
</dbReference>
<dbReference type="Pfam" id="PF08716">
    <property type="entry name" value="CoV_NSP7"/>
    <property type="match status" value="1"/>
</dbReference>
<dbReference type="Pfam" id="PF08717">
    <property type="entry name" value="CoV_NSP8"/>
    <property type="match status" value="1"/>
</dbReference>
<dbReference type="Pfam" id="PF08710">
    <property type="entry name" value="CoV_NSP9"/>
    <property type="match status" value="1"/>
</dbReference>
<dbReference type="Pfam" id="PF08715">
    <property type="entry name" value="CoV_peptidase"/>
    <property type="match status" value="1"/>
</dbReference>
<dbReference type="Pfam" id="PF06478">
    <property type="entry name" value="CoV_RPol_N"/>
    <property type="match status" value="1"/>
</dbReference>
<dbReference type="Pfam" id="PF01661">
    <property type="entry name" value="Macro"/>
    <property type="match status" value="1"/>
</dbReference>
<dbReference type="Pfam" id="PF05409">
    <property type="entry name" value="Peptidase_C30"/>
    <property type="match status" value="1"/>
</dbReference>
<dbReference type="Pfam" id="PF00680">
    <property type="entry name" value="RdRP_1"/>
    <property type="match status" value="1"/>
</dbReference>
<dbReference type="SMART" id="SM00506">
    <property type="entry name" value="A1pp"/>
    <property type="match status" value="1"/>
</dbReference>
<dbReference type="SUPFAM" id="SSF144246">
    <property type="entry name" value="Coronavirus NSP10-like"/>
    <property type="match status" value="1"/>
</dbReference>
<dbReference type="SUPFAM" id="SSF140367">
    <property type="entry name" value="Coronavirus NSP7-like"/>
    <property type="match status" value="1"/>
</dbReference>
<dbReference type="SUPFAM" id="SSF143076">
    <property type="entry name" value="Coronavirus NSP8-like"/>
    <property type="match status" value="1"/>
</dbReference>
<dbReference type="SUPFAM" id="SSF56672">
    <property type="entry name" value="DNA/RNA polymerases"/>
    <property type="match status" value="1"/>
</dbReference>
<dbReference type="SUPFAM" id="SSF142877">
    <property type="entry name" value="EndoU-like"/>
    <property type="match status" value="1"/>
</dbReference>
<dbReference type="SUPFAM" id="SSF52949">
    <property type="entry name" value="Macro domain-like"/>
    <property type="match status" value="1"/>
</dbReference>
<dbReference type="SUPFAM" id="SSF159936">
    <property type="entry name" value="NSP3A-like"/>
    <property type="match status" value="1"/>
</dbReference>
<dbReference type="SUPFAM" id="SSF52540">
    <property type="entry name" value="P-loop containing nucleoside triphosphate hydrolases"/>
    <property type="match status" value="1"/>
</dbReference>
<dbReference type="SUPFAM" id="SSF101816">
    <property type="entry name" value="Replicase NSP9"/>
    <property type="match status" value="1"/>
</dbReference>
<dbReference type="SUPFAM" id="SSF53335">
    <property type="entry name" value="S-adenosyl-L-methionine-dependent methyltransferases"/>
    <property type="match status" value="1"/>
</dbReference>
<dbReference type="SUPFAM" id="SSF50494">
    <property type="entry name" value="Trypsin-like serine proteases"/>
    <property type="match status" value="1"/>
</dbReference>
<dbReference type="PROSITE" id="PS51961">
    <property type="entry name" value="AV_NSP11N_COV_NSP15M"/>
    <property type="match status" value="1"/>
</dbReference>
<dbReference type="PROSITE" id="PS51963">
    <property type="entry name" value="BCOV_NSP1_C"/>
    <property type="match status" value="1"/>
</dbReference>
<dbReference type="PROSITE" id="PS51942">
    <property type="entry name" value="BCOV_NSP3C_C"/>
    <property type="match status" value="1"/>
</dbReference>
<dbReference type="PROSITE" id="PS51941">
    <property type="entry name" value="BCOV_NSP3C_M"/>
    <property type="match status" value="1"/>
</dbReference>
<dbReference type="PROSITE" id="PS51994">
    <property type="entry name" value="BCOV_NSP3E_G2M"/>
    <property type="match status" value="1"/>
</dbReference>
<dbReference type="PROSITE" id="PS51945">
    <property type="entry name" value="BCOV_NSP3E_NAB"/>
    <property type="match status" value="1"/>
</dbReference>
<dbReference type="PROSITE" id="PS51993">
    <property type="entry name" value="COV_3ECTO"/>
    <property type="match status" value="1"/>
</dbReference>
<dbReference type="PROSITE" id="PS51952">
    <property type="entry name" value="COV_EXON_MTASE_COACT"/>
    <property type="match status" value="1"/>
</dbReference>
<dbReference type="PROSITE" id="PS51954">
    <property type="entry name" value="COV_N7_MTASE"/>
    <property type="match status" value="1"/>
</dbReference>
<dbReference type="PROSITE" id="PS51962">
    <property type="entry name" value="COV_NSP1"/>
    <property type="match status" value="1"/>
</dbReference>
<dbReference type="PROSITE" id="PS52000">
    <property type="entry name" value="COV_NSP12_IF"/>
    <property type="match status" value="1"/>
</dbReference>
<dbReference type="PROSITE" id="PS51948">
    <property type="entry name" value="COV_NSP12_RDRP"/>
    <property type="match status" value="1"/>
</dbReference>
<dbReference type="PROSITE" id="PS51960">
    <property type="entry name" value="COV_NSP15_NTD"/>
    <property type="match status" value="1"/>
</dbReference>
<dbReference type="PROSITE" id="PS51991">
    <property type="entry name" value="COV_NSP2_C"/>
    <property type="match status" value="1"/>
</dbReference>
<dbReference type="PROSITE" id="PS51990">
    <property type="entry name" value="COV_NSP2_M"/>
    <property type="match status" value="1"/>
</dbReference>
<dbReference type="PROSITE" id="PS51989">
    <property type="entry name" value="COV_NSP2_N"/>
    <property type="match status" value="1"/>
</dbReference>
<dbReference type="PROSITE" id="PS51992">
    <property type="entry name" value="COV_NSP3_Y"/>
    <property type="match status" value="1"/>
</dbReference>
<dbReference type="PROSITE" id="PS51943">
    <property type="entry name" value="COV_NSP3A_UBL"/>
    <property type="match status" value="1"/>
</dbReference>
<dbReference type="PROSITE" id="PS51944">
    <property type="entry name" value="COV_NSP3D_UBL"/>
    <property type="match status" value="1"/>
</dbReference>
<dbReference type="PROSITE" id="PS51946">
    <property type="entry name" value="COV_NSP4C"/>
    <property type="match status" value="1"/>
</dbReference>
<dbReference type="PROSITE" id="PS51949">
    <property type="entry name" value="COV_NSP7"/>
    <property type="match status" value="1"/>
</dbReference>
<dbReference type="PROSITE" id="PS51950">
    <property type="entry name" value="COV_NSP8"/>
    <property type="match status" value="1"/>
</dbReference>
<dbReference type="PROSITE" id="PS51951">
    <property type="entry name" value="COV_NSP9_SSRNA_BD"/>
    <property type="match status" value="1"/>
</dbReference>
<dbReference type="PROSITE" id="PS51653">
    <property type="entry name" value="CV_ZBD"/>
    <property type="match status" value="1"/>
</dbReference>
<dbReference type="PROSITE" id="PS51442">
    <property type="entry name" value="M_PRO"/>
    <property type="match status" value="1"/>
</dbReference>
<dbReference type="PROSITE" id="PS51154">
    <property type="entry name" value="MACRO"/>
    <property type="match status" value="1"/>
</dbReference>
<dbReference type="PROSITE" id="PS51958">
    <property type="entry name" value="NENDOU"/>
    <property type="match status" value="1"/>
</dbReference>
<dbReference type="PROSITE" id="PS51947">
    <property type="entry name" value="NIRAN"/>
    <property type="match status" value="1"/>
</dbReference>
<dbReference type="PROSITE" id="PS51955">
    <property type="entry name" value="NIV_2_O_MTASE"/>
    <property type="match status" value="1"/>
</dbReference>
<dbReference type="PROSITE" id="PS51953">
    <property type="entry name" value="NIV_EXON"/>
    <property type="match status" value="1"/>
</dbReference>
<dbReference type="PROSITE" id="PS51124">
    <property type="entry name" value="PEPTIDASE_C16"/>
    <property type="match status" value="1"/>
</dbReference>
<dbReference type="PROSITE" id="PS51657">
    <property type="entry name" value="PSRV_HELICASE"/>
    <property type="match status" value="1"/>
</dbReference>
<dbReference type="PROSITE" id="PS50507">
    <property type="entry name" value="RDRP_SSRNA_POS"/>
    <property type="match status" value="1"/>
</dbReference>
<keyword id="KW-0002">3D-structure</keyword>
<keyword id="KW-1072">Activation of host autophagy by virus</keyword>
<keyword id="KW-0067">ATP-binding</keyword>
<keyword id="KW-1132">Decay of host mRNAs by virus</keyword>
<keyword id="KW-1015">Disulfide bond</keyword>
<keyword id="KW-0255">Endonuclease</keyword>
<keyword id="KW-1262">Eukaryotic host gene expression shutoff by virus</keyword>
<keyword id="KW-1193">Eukaryotic host translation shutoff by virus</keyword>
<keyword id="KW-0269">Exonuclease</keyword>
<keyword id="KW-0347">Helicase</keyword>
<keyword id="KW-1035">Host cytoplasm</keyword>
<keyword id="KW-1190">Host gene expression shutoff by virus</keyword>
<keyword id="KW-1043">Host membrane</keyword>
<keyword id="KW-1192">Host mRNA suppression by virus</keyword>
<keyword id="KW-0945">Host-virus interaction</keyword>
<keyword id="KW-0378">Hydrolase</keyword>
<keyword id="KW-1090">Inhibition of host innate immune response by virus</keyword>
<keyword id="KW-1114">Inhibition of host interferon signaling pathway by virus</keyword>
<keyword id="KW-1095">Inhibition of host ISG15 by virus</keyword>
<keyword id="KW-1100">Inhibition of host NF-kappa-B by virus</keyword>
<keyword id="KW-0922">Interferon antiviral system evasion</keyword>
<keyword id="KW-0456">Lyase</keyword>
<keyword id="KW-0464">Manganese</keyword>
<keyword id="KW-0472">Membrane</keyword>
<keyword id="KW-0479">Metal-binding</keyword>
<keyword id="KW-0489">Methyltransferase</keyword>
<keyword id="KW-1127">Modulation of host ubiquitin pathway by viral deubiquitinase</keyword>
<keyword id="KW-1130">Modulation of host ubiquitin pathway by virus</keyword>
<keyword id="KW-0540">Nuclease</keyword>
<keyword id="KW-0547">Nucleotide-binding</keyword>
<keyword id="KW-0548">Nucleotidyltransferase</keyword>
<keyword id="KW-0645">Protease</keyword>
<keyword id="KW-1185">Reference proteome</keyword>
<keyword id="KW-0677">Repeat</keyword>
<keyword id="KW-0688">Ribosomal frameshifting</keyword>
<keyword id="KW-0694">RNA-binding</keyword>
<keyword id="KW-0696">RNA-directed RNA polymerase</keyword>
<keyword id="KW-0788">Thiol protease</keyword>
<keyword id="KW-0808">Transferase</keyword>
<keyword id="KW-0812">Transmembrane</keyword>
<keyword id="KW-1133">Transmembrane helix</keyword>
<keyword id="KW-0833">Ubl conjugation pathway</keyword>
<keyword id="KW-0899">Viral immunoevasion</keyword>
<keyword id="KW-0693">Viral RNA replication</keyword>
<keyword id="KW-0862">Zinc</keyword>
<keyword id="KW-0863">Zinc-finger</keyword>
<proteinExistence type="evidence at protein level"/>
<reference key="1">
    <citation type="journal article" date="2007" name="J. Virol.">
        <title>Comparative analysis of twelve genomes of three novel group 2c and group 2d coronaviruses reveals unique group and subgroup features.</title>
        <authorList>
            <person name="Woo P.C.Y."/>
            <person name="Wang M."/>
            <person name="Lau S.K.P."/>
            <person name="Xu H.F."/>
            <person name="Poon R.W.S."/>
            <person name="Guo R."/>
            <person name="Wong B.H.L."/>
            <person name="Gao K."/>
            <person name="Tsoi H.-W."/>
            <person name="Huang Y."/>
            <person name="Li K.S.M."/>
            <person name="Lam C.S.F."/>
            <person name="Chan K.-H."/>
            <person name="Zheng B.-J."/>
            <person name="Yuen K.-Y."/>
        </authorList>
    </citation>
    <scope>NUCLEOTIDE SEQUENCE [GENOMIC RNA]</scope>
    <source>
        <strain>Isolate HKU4-1</strain>
    </source>
</reference>
<sequence length="7119" mass="795200">MLSKASVTTQGARGKYRAELYNEKRSDHVACTVPLCDTDDMACKLTPWFEDGETAFNQVSSILKEKGKILFVPMHMQRAMKFLPGPRVYLVERLTGGMLSKHFLVNQLAYKDQVGAAMMRTTLNAKPLGMFFPYDSSLETGEYTFLLRKNGLGGQLFRERPWDRKETPYVEILDDLEADPTGKYSQNLLKKLIGGDCIPIDQYMCGKNGKPIADYAKIVAKEGLTTLADIEVDVKSRMDSDRFIVLNKKLYRVVWNVTRRNVPYPKQTAFTIVSVVQCDDKDSVPEHTFTIGSQILMVSPLKATNNKNFNLKQRLLYTFYGKDAVQQPGYIYHSAYVDCNACGRGTWCTGNAIQGFACDCGANYSANDVDLQSSGLVPRNALFLANCPCANNGACSHSAAQVYNILDGKACVEVGGKSFTLTFGGVVYAYMGCCDGTMYFVPRAKSCVSRIGDAIFTGCTGTWDKVVETANLFLEKAQRSLNFCQQFALTEVVLAILSGTTSTFEELRDLCHNASYEKVRDHLVNHGFVVTIGDYIRDAINIGANGVCNATINAPFIAFTGLGESFKKVSAIPWKICSNLKSALDYYSSNIMFRVFPYDIPCDVSNFVELLLDCGKLTVATSYFVLRYLDEKFDTVLGTVSSACQTALSSFLNACVAASRATAGFINDMFKLFKVLMHKLYVYTSCGYVAVAEHSSKIVQQVLDIMSKAMKLLHTNVSWAGTKLSAIIYEGREALLFNSGTYFCLSTKAKTLQGQMNLVLPGDYNKKTLGILDPVPNADTIDVNANSTVVDVVHGQLEPTNEHGPSMIVGNYVLVSDKLFVRTEDEEFYPLCTNGKVVSTLFRLKGGMPSKKVTFGDVNTVEVTAYRSVSITYDIHPVLDALLSSSKLATFTVEKDLLVEDFVDVIKDEVLTLLTPLLRGYDIDGFDVEDFIDVPCYVYNQDGDCAWSSNMTFSINPVEDVEEVEEFIEDDYLSDELPIADDEEAWARAVEEVMPLDDILVAEIELEEDPPLETALESVEAEVVETAEAQEPSVESIDSTPSTSTVVGENDLSVKPMSRVAETDDVLELETAVVGGPVSDVTAIVTNDIVSVEQAQQCGVSSLPIQDEASENQVHQVSDLQGNELLCSETKVEIVQPRQDLKPRRSRKSKVDLSKYKHTVINNSVTLVLGDAIQIASLLPKCILVNAANRHLKHGGGIAGVINKASGGDVQEESDEYISNNGPLHVGDSVLLKGHGLADAILHVVGPDARNNEDAALLKRCYKAFNKHTIVVTPLISAGIFSVDPKVSFEYLLANVTTTTYVVVNNEDIYNTLATPSKPDGLVYSFEGWRGTVRTAKNYGFTCFICTEYSANVKFLRTKGVDTTKKIQTVDGVSYYLYSARDALTDVIAAANGCSGICAMPFGYVTHGLDLAQSGNYVRQVKVPYVCLLASKEQIPIMNSDVAIQTPETAFINNVTSNGGYHSWHLVSGDLIVKDVCYKKLLHWSGQTICYADNKFYVVKNDVALPFSDLEACRAYLTSRAAQQVNIEVLVTIDGVNFRTVILNDTTTFRKQLGATFYKGVDISDAFPTVKMGGESLFVADNLSESEKVVLKEYYGTSDVTFLQRYYSLQPLVQQWKFVVHDGVKSLKLSNYNCYINATIMMIDMLHDIKFVVPALQNAYLRYKGGDPYDFLALIMAYGDCTFDNPDDEAKLLHTLLAKAELTVSAKMVWREWCTVCGIRDIEYTGMRACVYAGVNSMEELQSVFNETCVCGSVKHRQLVEHSAPWLLVSGLNEVKVSTSTDPIYRAFNVFQGVETSVGHYVHIRVKDGLFYKYDSGSLTKTSDMKCKMTSVWYPTVRYTADCNVVVYDLDGVTKVEVNPDLSNYYMKDGKYYTSKPTIKYSPATILPGSVYSNSCLVGVDGTPGSDTISKFFNDLLGFDETKPISKKLTYSLLPNEDGDVLLSEFSNYNPVYKKGVMLKGKPILWVNNGVCDSALNKPNRASLRQLYDVAPIVLDNKYTVLQDNTSQLVEHNVPVVDDVPITTRKLIEVKCKGLNKPFVKGNFSFVNDPNGVTVVDTLGLTELRALYVDINTRYIVLRDNNWSSLFKLHTVESGDLQIVAAGGSVTRRARVLLGASSLFASFAKITVTATTAACKTAGRGFCKFVVNYGVLQNMFVFLKMLFFLPFNYLWPKKQPTVDIGVSGLRTAGIVTTNIVKQCGTAAYYMLLGKFKRVDWKATLRLFLLLCTTILLLSSIYHLVLFNQVLSSDVMLEDATGILAIYKEVRSYLGIRTLCDGLVVEYRNTSFDVMEFCSNRSVLCQWCLIGQDSLTRYSALQMLQTHITSYVLNIDWIWFALEFFLAYVLYTSSFNVLLLVVTAQYFFAYTSAFVNWRAYNYIVSGLFFLVTHIPLHGLVRVYNFLACLWFLRKFYSHVINGCKDTACLLCYKRNRLTRVEASTIVCGTKRTFYIAANGGTSYCCKHNWNCVECDTAGVGNTFICTEVANDLTTTLRRLIKPTDQSHYYVDSVVVKDAVVELHYNRDGSSCYERYPLCYFTNLEKLKFKEVCKTPTGIPEHNFLIYDTNDRGQENLARSACVYYSQVLCKPMLLVDVNLVTTVGDSREIAIKMLDSFINSFISLFSVSRDKLEKLINTARDCVRRGDDFQNVLKTFTDAARGHAGVESDVETTMVVDALQYAHKNDIQLTTECYNNYVPGYIKPDSINTLDLGCLIDLKAASVNQTSMRNANGACVWNSGDYMKLSDSFKRQIRIACRKCNIPFRLTTSKLRAADNILSVKFSATKIVGGAPSWLLRVRDLTVKGYCILTLFVFTVAVLSWFCLPSYSIATVNFNDDRILTYKVIENGIVRDIAPNDVCFANKYGHFSKWFNENHGGVYRNSMDCPITIAVIAGVAGARVANVPANLAWVGKQIVLFVSRVFANTNVCFTPINEIPYDTFSDSGCVLSSECTLFRDAEGNLNPFCYDPTVLPGASSYADMKPHVRYDMYDSDMYIKFPEVIVESTLRITKTLATQYCRFGSCEESAAGVCISTNGSWALYNQNYSTRPGIYCGDDYFDIVRRLAISLFQPVTYFQLSTSLAMGLVLCVFLTAAFYYINKVKRALADYTQCAVVAVVAALLNSLCLCFIVANPLLVAPYTAMYYYATFYLTGEPAFIMHISWYVMFGAVVPIWMLASYTVGVMLRHLFWVLAYFSKKHVDVFTDGKLNCSFQDAASNIFVIGKDTYVALRNAITQDSFVRYLSLFNKYKYYSGAMDTASYREACAAHLCKALQTYSETGSDILYQPPNCSVTSSVLQSGLVKMSAPSGAVENCIVQVTCGSMTLNGLWLDNTVWCPRHIMCPADQLTDPNYDALLISKTNHSFIVQKHIGAQANLRVVAHSMVGVLLKLTVDVANPSTPAYTFSTVKPGASFSVLACYNGKPTGVFTVNLRHNSTIKGSFLCGSCGSVGYTENGGVINFVYMHQMELSNGTHTGSSFDGVMYGAFEDKQTHQLQLTDKYCTINVVAWLYAAVLNGCKWFVKPTRVGIVTYNEWALSNQFTEFVGTQSIDMLAHRTGVSVEQMLAAIQSLHAGFQGKTILGQSTLEDEFTPDDVNMQVMGVVMQSGVKRISYGFIHWLISTFVLAYVSVMQLTKFTMWTYLFETIPTQMTPLLLGFMACVMFTVKHKHTFMSLFLLPVALCLTYANIVYEPQTLISSTLIAVANWLTPTSVYMRTTHFDFGLYISLSFVLAIIVRRLYRPSMSNLALALCSGVMWFYTYVIGDHSSPITYLMFITTLTSDYTITVFATVNLAKFISGLVFFYAPHLGFILPEVKLVLLIYLGLGYMCTMYFGVFSLLNLKLRVPLGVYDYSVSTQEFRFLTGNGLHAPRNSWEALILNFKLLGIGGTPCIKVATVQSKLTDLKCTSVVLLTVLQQLHLESNSKAWSYCVKLHNEILAAVDPTEAFERFVCLFATLMSFSANVDLDALANDLFENSSVLQATLTEFSHLATYAELETAQSSYQKALNSGDASPQVLKALQKAVNVAKNAYEKDKAVARKLERMAEQAMTSMYKQARAEDKKAKIVSAMQTMLFGMIKKLDNDVLNGVIANARNGCVPLSIVPLCASNKLRVVIPDISVWNKVVNWPSVSYAGSLWDITVINNVDNEVVKPTDVVETNESLTWPLVIECSRSSSSAVKLQNNEIHPKGLKTMVITAGVDQVNCNSSAVAYYEPVQGHRMVMGLLSENAHLKWAKVEGKDGFINIELQPPCKFLIAGPKGPEIRYLYFVKNLNNLHRGQLLGHIAATVRLQAGANTEFASNSTVLTLVAFAVDPAKAYLDYVGSGGTPLSNYVKMLAPKTGTGVAISVKPEATADQETYGGASVCLYCRAHIEHPDVSGVCKYKTRFVQIPAHVRDPVGFLLKNVPCNVCQYWVGYGCNCDALRNNTVPQSKDTNFLNRVRGSSVNARLEPCSSGLTTDVVYRAFDICNFKARVAGIGKYYKTNTCRFVQVDDEGHKLDSYFIVKRHTMSNYELEKRCYDLLKDCDAVAIHDFFIFDVDKTKTPHIVRQSLTEYTMMDLVYALRHFDQNNCEVLKSILVKYGCCEQSYFDNKLWFDFVENPSVIGVYHKLGERIRQAMLNTVKMCDHMVKSGLVGVLTLDNQDLNGKWYDFGDFVITQPGAGVAIVDSYYSYLMPVLSMTNCLAAETHKDCDFNKPLIEWPLLEYDYTDYKIGLFNKYFKYWDQTYHPNCVNCSDDRCILHCANFNVLFSMVLPNTSFGPIVRKIFVDGVPFIVSCGYHYKELGLVMNMDFNIHRHRLALKELMMYAADPAMHIASASALWDLRTPCFSVAALTTGLTFQTVRPGNFNKDFYDFVVSRGFFKEGSSVTLKHFFFAQDGHAAITDYSYYAYNLPTMVDIKQMLFCMEVVDKYFDIYDGGCLNASEVIVNNLDKSAGHPFNKFGKARVYYESMSYQEQDELFAVTKRNVLPTITQMNLKYAISAKNRARTVAGVSILSTMTNRQYHQKMLKSMAATRGATCVIGTTKFYGGWDFMLKTLYKDVESPHLMGWDYPKCDRAMPNMCRILASLILARKHSTCCTNSDRFYRLANECAQVLSEYVLCGGGYYVKPGGTSSGDATTAYANSVFNILQATTANVSALMSANGNTIIDREIKDMQFDLYINVYRKVVPDPKFVDKYYAFLNKHFSMMILSDDGVVCYNSDYAAKGYVASIQNFKETLYYQNNVFMSEAKCWVETNLEKGPHEFCSQHTLYIKDGDDGYFLPYPDPSRILSAGCFVDDIVKTDGTVMMERYVSLAIDAYPLTKHDDTEYQNVFWVYLQYIEKLYKDLTGHMLDSYSVMLCGDDSAKFWEEGFYRDLYSSPTTLQAVGSCVVCHSQTSLRCGTCIRRPFLCCKCCYDHVIATPHKMVLSVSPYVCNAPGCDVSDVTKLYLGGMSYYCNDHRPVCSFPLCANGLVFGLYKNMCTGSSSIMEFNRLATCDWSDSGDYTLANTTTEPLKLFAAETLRATEEASKQSYAIATIKEIVGERELILVWEVGKSKPPLNRNYVFTGYHLTKNSKVQLGEYVFERIDYSDAVSYKSSTTYKLAVGDIFVLTSHSVATLSAPTIVNQERYLKITGIYPTITVPEEFANHVVNFQKAGFSKYVTVQGPPGTGKSHFAIGLAIYYPTARIVYTACSHAAVDALCEKAFKYLNIAKCSRIIPAKARVECYDRFKVNDTNSQYLFSTVNALPEISVDILVVDEVSMCTNYDLSIINSRVKAKHIVYVGDPAQLPAPRTLLIRGTLEPENFNSVTRLMCNLGPDIFLSVCYRCPKEIVSTVSALVYNNKLSAKKDASGQCFKILFKGSVTHDASSAINRPQLNFVKTFIAANPNWSKAVFISPYNSQNAVARSMLGLTTQTVDSSQGSEYPYVIFCQTADTAHANNLNRFNVAVTRAQKGILCVMTSQVLFDSLEFAELSLNNYKLQSQIVTGLFKDCSREDTGLPPAYAPTYLSVDAKYKTTDELCVNLNITPNVTYSRVISRMGFKLDATIPGYPKLFITRDEAIRQVRSWVGFDVEGAHASRNACGTNVPLQLGFSTGVNFVVQPVGVVDTEWGSMLTTISARPPPGEQFKHLVPLMNKGATWPIVRRRIVQMLSDTLDKLSDYCTFVCWAHGFELTSASYFCKIGKEQRCSMCSRRASTFSSPLQSYACWSHSSGYDYVYNPFFVDVQQWGYVGNLATNHDRYCGIHAGAHVASSDAIMTRCLAIYDCFIERVDWDVTYPYISHEQKLNSCCRTVERNVVRSAVLSGKFEKIYDIGNPKGIAIISEPVEWHFYDAQPLSNKVKKLFYTDDVSKQFEDGLCLFWNCNVSKYPSNAVVCRFDTRVHSEFNLPGCNGGSLYVNKHAFHTPAYDINAFRDLKPLPFFYYSTTPCEVHGSGNMLEDIDYVPLKSAVCITACNLGGAVCRKHAAEYRDYMEAYNIVSAAGFRLWVYKTFDIYNLWSTFVKVQGLENIAFNVIKQGHFTGVDGELPVAVVNDKIFTKNGTDDVCIFKNETALPTNVAFELYAKRAVRSHPDLNLLRNLEVDVCYNFVLWDYDRNNIYGTTTIGVCKYTDIDVNPNLNMCFDIRDKGSLERFMSMPNGVLISDRKIKNYPCISGPKHAYFNGAILRNIDAKQPVIFYLYKKVNNEFVSFSDTFYTCGRTVGDFTVLTPMEEDFLVLDSDVFIKKYGLEDYAFEHVVYGDFSHTTLGGLHLLIGLYKKMREGHILMEEMLKDRATVHNYFITDSNTASYKAVCSVIDLRLDDFVTIIKEMDLDVVSKVVKVPIDLTMIEFMLWCRDGKVQTFYPRLQATNDWKPGLTMPSLFKVQQMNLEPCLLANYKQSIPMPNGVHMNVAKYMQLCQYLNTCTLAVPANMRVIHFGAGCEKGVAPGTSVLRQWLPLDAVLIDNDLNEFVSDADITIFGDCVTVHVGQQVDLLISDMYDPCTKAVGEVNQTKALFFVYLCNFIKNNLALGGSVAIKITEHSWSADLYKIMGRFAYWTVFCTNANASSSEGFLIGINFLGELKEEIDGNVMHANYIFWRNSTPMNLSTYSLFDLSRFPLKLKGTPVLQLKESQINELVISLLSQGKLLIRDNDTLNVSTDVLVNFRKRL</sequence>
<accession>P0C6W3</accession>
<accession>A3EX93</accession>
<name>R1AB_BCHK4</name>